<reference key="1">
    <citation type="journal article" date="1989" name="Biochem. J.">
        <title>Structure of cDNA clones coding for the entire prepro alpha 1 (III) chain of human type III procollagen. Differences in protein structure from type I procollagen and conservation of codon preferences.</title>
        <authorList>
            <person name="Ala-Kokko L."/>
            <person name="Kontusaari S."/>
            <person name="Baldwin C.T."/>
            <person name="Kuivaniemi H."/>
            <person name="Prockop D.J."/>
        </authorList>
    </citation>
    <scope>NUCLEOTIDE SEQUENCE [MRNA] (ISOFORM 1)</scope>
    <scope>VARIANT GLN-1353</scope>
    <source>
        <tissue>Skin fibroblast</tissue>
    </source>
</reference>
<reference key="2">
    <citation type="journal article" date="2001" name="Matrix Biol.">
        <title>Genomic organization of the human COL3A1 and COL5A2 genes: COL5A2 has evolved differently than the other minor fibrillar collagen genes.</title>
        <authorList>
            <person name="Valkkila M."/>
            <person name="Melkoniemi M."/>
            <person name="Kvist L."/>
            <person name="Kuivaniemi H."/>
            <person name="Tromp G."/>
            <person name="Ala-Kokko L."/>
        </authorList>
    </citation>
    <scope>NUCLEOTIDE SEQUENCE [GENOMIC DNA] (ISOFORM 1)</scope>
    <scope>VARIANT GLN-1353</scope>
</reference>
<reference key="3">
    <citation type="submission" date="2013-01" db="EMBL/GenBank/DDBJ databases">
        <authorList>
            <person name="Fang H."/>
        </authorList>
    </citation>
    <scope>NUCLEOTIDE SEQUENCE [GENOMIC DNA]</scope>
    <scope>VARIANT ARG-726</scope>
</reference>
<reference key="4">
    <citation type="submission" date="2009-09" db="EMBL/GenBank/DDBJ databases">
        <authorList>
            <consortium name="NHLBI resequencing and genotyping service (RS&amp;G)"/>
        </authorList>
    </citation>
    <scope>NUCLEOTIDE SEQUENCE [GENOMIC DNA]</scope>
</reference>
<reference key="5">
    <citation type="journal article" date="2005" name="Nature">
        <title>Generation and annotation of the DNA sequences of human chromosomes 2 and 4.</title>
        <authorList>
            <person name="Hillier L.W."/>
            <person name="Graves T.A."/>
            <person name="Fulton R.S."/>
            <person name="Fulton L.A."/>
            <person name="Pepin K.H."/>
            <person name="Minx P."/>
            <person name="Wagner-McPherson C."/>
            <person name="Layman D."/>
            <person name="Wylie K."/>
            <person name="Sekhon M."/>
            <person name="Becker M.C."/>
            <person name="Fewell G.A."/>
            <person name="Delehaunty K.D."/>
            <person name="Miner T.L."/>
            <person name="Nash W.E."/>
            <person name="Kremitzki C."/>
            <person name="Oddy L."/>
            <person name="Du H."/>
            <person name="Sun H."/>
            <person name="Bradshaw-Cordum H."/>
            <person name="Ali J."/>
            <person name="Carter J."/>
            <person name="Cordes M."/>
            <person name="Harris A."/>
            <person name="Isak A."/>
            <person name="van Brunt A."/>
            <person name="Nguyen C."/>
            <person name="Du F."/>
            <person name="Courtney L."/>
            <person name="Kalicki J."/>
            <person name="Ozersky P."/>
            <person name="Abbott S."/>
            <person name="Armstrong J."/>
            <person name="Belter E.A."/>
            <person name="Caruso L."/>
            <person name="Cedroni M."/>
            <person name="Cotton M."/>
            <person name="Davidson T."/>
            <person name="Desai A."/>
            <person name="Elliott G."/>
            <person name="Erb T."/>
            <person name="Fronick C."/>
            <person name="Gaige T."/>
            <person name="Haakenson W."/>
            <person name="Haglund K."/>
            <person name="Holmes A."/>
            <person name="Harkins R."/>
            <person name="Kim K."/>
            <person name="Kruchowski S.S."/>
            <person name="Strong C.M."/>
            <person name="Grewal N."/>
            <person name="Goyea E."/>
            <person name="Hou S."/>
            <person name="Levy A."/>
            <person name="Martinka S."/>
            <person name="Mead K."/>
            <person name="McLellan M.D."/>
            <person name="Meyer R."/>
            <person name="Randall-Maher J."/>
            <person name="Tomlinson C."/>
            <person name="Dauphin-Kohlberg S."/>
            <person name="Kozlowicz-Reilly A."/>
            <person name="Shah N."/>
            <person name="Swearengen-Shahid S."/>
            <person name="Snider J."/>
            <person name="Strong J.T."/>
            <person name="Thompson J."/>
            <person name="Yoakum M."/>
            <person name="Leonard S."/>
            <person name="Pearman C."/>
            <person name="Trani L."/>
            <person name="Radionenko M."/>
            <person name="Waligorski J.E."/>
            <person name="Wang C."/>
            <person name="Rock S.M."/>
            <person name="Tin-Wollam A.-M."/>
            <person name="Maupin R."/>
            <person name="Latreille P."/>
            <person name="Wendl M.C."/>
            <person name="Yang S.-P."/>
            <person name="Pohl C."/>
            <person name="Wallis J.W."/>
            <person name="Spieth J."/>
            <person name="Bieri T.A."/>
            <person name="Berkowicz N."/>
            <person name="Nelson J.O."/>
            <person name="Osborne J."/>
            <person name="Ding L."/>
            <person name="Meyer R."/>
            <person name="Sabo A."/>
            <person name="Shotland Y."/>
            <person name="Sinha P."/>
            <person name="Wohldmann P.E."/>
            <person name="Cook L.L."/>
            <person name="Hickenbotham M.T."/>
            <person name="Eldred J."/>
            <person name="Williams D."/>
            <person name="Jones T.A."/>
            <person name="She X."/>
            <person name="Ciccarelli F.D."/>
            <person name="Izaurralde E."/>
            <person name="Taylor J."/>
            <person name="Schmutz J."/>
            <person name="Myers R.M."/>
            <person name="Cox D.R."/>
            <person name="Huang X."/>
            <person name="McPherson J.D."/>
            <person name="Mardis E.R."/>
            <person name="Clifton S.W."/>
            <person name="Warren W.C."/>
            <person name="Chinwalla A.T."/>
            <person name="Eddy S.R."/>
            <person name="Marra M.A."/>
            <person name="Ovcharenko I."/>
            <person name="Furey T.S."/>
            <person name="Miller W."/>
            <person name="Eichler E.E."/>
            <person name="Bork P."/>
            <person name="Suyama M."/>
            <person name="Torrents D."/>
            <person name="Waterston R.H."/>
            <person name="Wilson R.K."/>
        </authorList>
    </citation>
    <scope>NUCLEOTIDE SEQUENCE [LARGE SCALE GENOMIC DNA]</scope>
</reference>
<reference key="6">
    <citation type="submission" date="2005-09" db="EMBL/GenBank/DDBJ databases">
        <authorList>
            <person name="Mural R.J."/>
            <person name="Istrail S."/>
            <person name="Sutton G.G."/>
            <person name="Florea L."/>
            <person name="Halpern A.L."/>
            <person name="Mobarry C.M."/>
            <person name="Lippert R."/>
            <person name="Walenz B."/>
            <person name="Shatkay H."/>
            <person name="Dew I."/>
            <person name="Miller J.R."/>
            <person name="Flanigan M.J."/>
            <person name="Edwards N.J."/>
            <person name="Bolanos R."/>
            <person name="Fasulo D."/>
            <person name="Halldorsson B.V."/>
            <person name="Hannenhalli S."/>
            <person name="Turner R."/>
            <person name="Yooseph S."/>
            <person name="Lu F."/>
            <person name="Nusskern D.R."/>
            <person name="Shue B.C."/>
            <person name="Zheng X.H."/>
            <person name="Zhong F."/>
            <person name="Delcher A.L."/>
            <person name="Huson D.H."/>
            <person name="Kravitz S.A."/>
            <person name="Mouchard L."/>
            <person name="Reinert K."/>
            <person name="Remington K.A."/>
            <person name="Clark A.G."/>
            <person name="Waterman M.S."/>
            <person name="Eichler E.E."/>
            <person name="Adams M.D."/>
            <person name="Hunkapiller M.W."/>
            <person name="Myers E.W."/>
            <person name="Venter J.C."/>
        </authorList>
    </citation>
    <scope>NUCLEOTIDE SEQUENCE [LARGE SCALE GENOMIC DNA]</scope>
    <scope>VARIANT GLN-1353</scope>
</reference>
<reference key="7">
    <citation type="journal article" date="2004" name="Genome Res.">
        <title>The status, quality, and expansion of the NIH full-length cDNA project: the Mammalian Gene Collection (MGC).</title>
        <authorList>
            <consortium name="The MGC Project Team"/>
        </authorList>
    </citation>
    <scope>NUCLEOTIDE SEQUENCE [LARGE SCALE MRNA] (ISOFORM 2)</scope>
    <scope>VARIANT GLN-1353</scope>
    <source>
        <tissue>Liver</tissue>
    </source>
</reference>
<reference key="8">
    <citation type="journal article" date="1989" name="Gene">
        <title>Cloning and analysis of the 5' portion of the human type-III procollagen gene (COL3A1).</title>
        <authorList>
            <person name="Benson-Chanda V."/>
            <person name="Su M.W."/>
            <person name="Weil D."/>
            <person name="Chu M.-L."/>
            <person name="Ramirez F."/>
        </authorList>
    </citation>
    <scope>NUCLEOTIDE SEQUENCE [GENOMIC DNA] OF 1-176</scope>
</reference>
<reference key="9">
    <citation type="journal article" date="1988" name="Nucleic Acids Res.">
        <title>Nucleotide sequence of a cDNA coding for the amino-terminal region of human prepro alpha 1(III) collagen.</title>
        <authorList>
            <person name="Toman D."/>
            <person name="Ricca G."/>
            <person name="de Crombrugghe B."/>
        </authorList>
    </citation>
    <scope>NUCLEOTIDE SEQUENCE [MRNA] OF 1-170 (ISOFORMS 1/2)</scope>
    <source>
        <tissue>Placenta</tissue>
    </source>
</reference>
<reference key="10">
    <citation type="journal article" date="1989" name="Nucleic Acids Res.">
        <title>Nucleotide and amino acid sequences of the entire human alpha 1 (III) collagen.</title>
        <authorList>
            <person name="Janeczko R.A."/>
            <person name="Ramirez F."/>
        </authorList>
    </citation>
    <scope>NUCLEOTIDE SEQUENCE [MRNA] OF 149-1225 (ISOFORM 1)</scope>
</reference>
<reference key="11">
    <citation type="journal article" date="1977" name="Biochemistry">
        <title>Covalent structure of collagen: amino acid sequence of cyanogen bromide peptides from the amino-terminal segment of type III collagen of human liver.</title>
        <authorList>
            <person name="Seyer J.M."/>
            <person name="Kang A.H."/>
        </authorList>
    </citation>
    <scope>PROTEIN SEQUENCE OF 168-398</scope>
    <scope>HYDROXYLATION AT PRO-173; PRO-179; PRO-182; PRO-185; PRO-191; PRO-194; PRO-197; PRO-203; PRO-206; PRO-215; PRO-218; PRO-236; PRO-239; PRO-245; PRO-248; PRO-257; PRO-260; LYS-263; PRO-281; LYS-284; PRO-290; PRO-296; PRO-305; PRO-311; PRO-314; PRO-332; PRO-335; PRO-338; PRO-344; PRO-347; PRO-359; PRO-365; PRO-371; PRO-383; PRO-386 AND PRO-392</scope>
</reference>
<reference key="12">
    <citation type="submission" date="1977-12" db="PIR data bank">
        <authorList>
            <person name="Seyer J.M."/>
        </authorList>
    </citation>
    <scope>SEQUENCE REVISION</scope>
</reference>
<reference key="13">
    <citation type="journal article" date="1993" name="Am. J. Hum. Genet.">
        <title>Parental somatic and germ-line mosaicism for a multiexon deletion with unusual endpoints in a type III collagen (COL3A1) allele produces Ehlers-Danlos syndrome type IV in the heterozygous offspring.</title>
        <authorList>
            <person name="Milewicz D.M."/>
            <person name="Witz A.M."/>
            <person name="Smith A.C."/>
            <person name="Manchester D.K."/>
            <person name="Waldstein G."/>
            <person name="Byers P.H."/>
        </authorList>
    </citation>
    <scope>NUCLEOTIDE SEQUENCE [GENOMIC DNA] OF 186-194 (ISOFORMS 1/2)</scope>
</reference>
<reference key="14">
    <citation type="journal article" date="1995" name="Biochem. J.">
        <title>Abnormal type III collagen produced by an exon-17-skipping mutation of the COL3A1 gene in Ehlers-Danlos syndrome type IV is not incorporated into the extracellular matrix.</title>
        <authorList>
            <person name="Chiodo A.A."/>
            <person name="Sillence D.O."/>
            <person name="Cole W.G."/>
            <person name="Bateman J.F."/>
        </authorList>
    </citation>
    <scope>NUCLEOTIDE SEQUENCE [MRNA] OF 302-423 (ISOFORMS 1/2)</scope>
</reference>
<reference key="15">
    <citation type="journal article" date="1995" name="Biochem. Biophys. Res. Commun.">
        <title>Onco-fetal/laminin-binding collagen from colon carcinoma: detection of new sequences.</title>
        <authorList>
            <person name="Minafra I.P."/>
            <person name="Andriolo M."/>
            <person name="Basirico L."/>
            <person name="Aquino A."/>
            <person name="Minafra S."/>
            <person name="Boutillon M.-M."/>
            <person name="van der Rest M."/>
        </authorList>
    </citation>
    <scope>PROTEIN SEQUENCE OF 395-416; 579-595; 800-814 AND 1064-1079</scope>
    <source>
        <tissue>Colon carcinoma</tissue>
    </source>
</reference>
<reference key="16">
    <citation type="journal article" date="1978" name="Biochemistry">
        <title>Covalent structure of collagen: amino acid sequence of five consecutive CNBr peptides from type III collagen of human liver.</title>
        <authorList>
            <person name="Seyer J.M."/>
            <person name="Kang A.H."/>
        </authorList>
    </citation>
    <scope>PROTEIN SEQUENCE OF 399-727</scope>
    <scope>HYDROXYLATION AT PRO-404; PRO-407; PRO-416; PRO-425; PRO-434; PRO-443; PRO-455; PRO-458; PRO-470; PRO-473; PRO-479; PRO-488; PRO-500; PRO-512; PRO-524; PRO-530; PRO-533; PRO-539; PRO-542; PRO-545; PRO-551; PRO-554; PRO-563; PRO-566; PRO-575; PRO-581; PRO-590; PRO-599; PRO-602; PRO-608; PRO-620; PRO-635; PRO-644; PRO-650; PRO-656; PRO-659; PRO-661; PRO-668; PRO-671; PRO-680; PRO-686; PRO-692; PRO-701; PRO-703; PRO-713; PRO-716 AND PRO-722</scope>
</reference>
<reference key="17">
    <citation type="journal article" date="1991" name="J. Biol. Chem.">
        <title>G to T transversion at position +5 of a splice donor site causes skipping of the preceding exon in the type III procollagen transcripts of a patient with Ehlers-Danlos syndrome type IV.</title>
        <authorList>
            <person name="Lee B."/>
            <person name="Vitale E."/>
            <person name="Superti-Furga A."/>
            <person name="Steinmann B."/>
            <person name="Ramirez F."/>
        </authorList>
    </citation>
    <scope>NUCLEOTIDE SEQUENCE [GENOMIC DNA] OF 537-605</scope>
</reference>
<reference key="18">
    <citation type="journal article" date="1980" name="Biochemistry">
        <title>Covalent structure of collagen: amino acid sequence of alpha 1 (III)-CB5 from type III collagen of human liver.</title>
        <authorList>
            <person name="Seyer J.M."/>
            <person name="Mainardi C."/>
            <person name="Kang A.H."/>
        </authorList>
    </citation>
    <scope>PROTEIN SEQUENCE OF 728-964</scope>
    <scope>HYDROXYLATION AT PRO-728; PRO-737; PRO-746; PRO-749; PRO-755; PRO-770; PRO-776; PRO-785; PRO-788; PRO-797; PRO-806; PRO-812; PRO-815; PRO-821; PRO-830; PRO-839; PRO-845; PRO-854; LYS-860; PRO-866; PRO-869; PRO-875; PRO-881; PRO-884; PRO-890; PRO-892; PRO-899; PRO-905; PRO-914; PRO-917; PRO-929; PRO-935; PRO-941; PRO-944 AND PRO-962</scope>
</reference>
<reference key="19">
    <citation type="journal article" date="1990" name="J. Biol. Chem.">
        <title>A base substitution at a splice site in the COL3A1 gene causes exon skipping and generates abnormal type III procollagen in a patient with Ehlers-Danlos syndrome type IV.</title>
        <authorList>
            <person name="Cole W.G."/>
            <person name="Chiodo A.A."/>
            <person name="Lamande S.R."/>
            <person name="Janeczko R."/>
            <person name="Ramirez F."/>
            <person name="Dahl H.-H.M."/>
            <person name="Chan D."/>
            <person name="Bateman J.F."/>
        </authorList>
    </citation>
    <scope>NUCLEOTIDE SEQUENCE [GENOMIC DNA / MRNA] OF 861-1015 (ISOFORM 1)</scope>
</reference>
<reference key="20">
    <citation type="journal article" date="1988" name="Nucleic Acids Res.">
        <title>Human pro alpha 1(III) collagen: cDNA sequence for the 3' end.</title>
        <authorList>
            <person name="Mankoo B.S."/>
            <person name="Dalgleish R."/>
        </authorList>
    </citation>
    <scope>NUCLEOTIDE SEQUENCE [MRNA] OF 950-1466 (ISOFORM 1)</scope>
    <scope>VARIANT GLN-1353</scope>
</reference>
<reference key="21">
    <citation type="journal article" date="1988" name="Nucleic Acids Res.">
        <title>Human type III collagen 'variant' is a cDNA cloning artefact.</title>
        <authorList>
            <person name="Molyneux K."/>
            <person name="Dalgleish R."/>
        </authorList>
    </citation>
    <scope>SEQUENCE REVISION TO 1184</scope>
</reference>
<reference key="22">
    <citation type="journal article" date="1981" name="Biochemistry">
        <title>Covalent structure of collagen: amino acid sequence of alpha 1(III)-CB9 from type III collagen of human liver.</title>
        <authorList>
            <person name="Seyer J.M."/>
            <person name="Kang A.H."/>
        </authorList>
    </citation>
    <scope>PROTEIN SEQUENCE OF 965-1200</scope>
    <scope>HYDROXYLATION AT PRO-965; PRO-971; LYS-977; PRO-983; PRO-995; PRO-1001; PRO-1010; PRO-1016; PRO-1022; PRO-1028; PRO-1040; PRO-1043; PRO-1046; PRO-1049; PRO-1052; PRO-1076; PRO-1085; LYS-1106; PRO-1112; PRO-1115; PRO-1118; PRO-1121; PRO-1133; PRO-1148; PRO-1157; PRO-1163; PRO-1178; PRO-1181; PRO-1184; PRO-1187; PRO-1190 AND PRO-1193</scope>
</reference>
<reference key="23">
    <citation type="journal article" date="1984" name="Nucleic Acids Res.">
        <title>Molecular cloning and carboxyl-propeptide analysis of human type III procollagen.</title>
        <authorList>
            <person name="Loidl H.R."/>
            <person name="Brinker J.M."/>
            <person name="May M."/>
            <person name="Pihlajaniemi T."/>
            <person name="Morrow S."/>
            <person name="Rosenbloom J."/>
            <person name="Myers J.C."/>
        </authorList>
    </citation>
    <scope>NUCLEOTIDE SEQUENCE [MRNA] OF 1065-1466 (ISOFORM 1)</scope>
</reference>
<reference key="24">
    <citation type="journal article" date="1986" name="Biochemistry">
        <title>Human type III collagen gene expression is coordinately modulated with the type I collagen genes during fibroblast growth.</title>
        <authorList>
            <person name="Miskulin M."/>
            <person name="Dalgleish R."/>
            <person name="Kluve-Beckerman B."/>
            <person name="Rennard S.I."/>
            <person name="Tolstoshev P."/>
            <person name="Brantly M."/>
            <person name="Crystal R.G."/>
        </authorList>
    </citation>
    <scope>NUCLEOTIDE SEQUENCE [MRNA] OF 1161-1200 (ISOFORMS 1/2)</scope>
</reference>
<reference key="25">
    <citation type="journal article" date="1985" name="Proc. Natl. Acad. Sci. U.S.A.">
        <title>Human alpha 1(III) and alpha 2(V) procollagen genes are located on the long arm of chromosome 2.</title>
        <authorList>
            <person name="Emanuel B.S."/>
            <person name="Cannizzaro L.A."/>
            <person name="Seyer J.M."/>
            <person name="Myers J.C."/>
        </authorList>
    </citation>
    <scope>NUCLEOTIDE SEQUENCE [MRNA] OF 1165-1196 (ISOFORMS 1/2)</scope>
</reference>
<reference key="26">
    <citation type="journal article" date="1985" name="J. Biol. Chem.">
        <title>Isolation of cDNA and genomic clones encoding human pro-alpha 1 (III) collagen. Partial characterization of the 3' end region of the gene.</title>
        <authorList>
            <person name="Chu M.-L."/>
            <person name="Weil D."/>
            <person name="de Wet W.J."/>
            <person name="Bernard M.P."/>
            <person name="Sippola M."/>
            <person name="Ramirez F."/>
        </authorList>
    </citation>
    <scope>NUCLEOTIDE SEQUENCE [MRNA] OF 1122-1466 (ISOFORMS 1/2)</scope>
    <scope>VARIANT GLN-1353</scope>
</reference>
<reference key="27">
    <citation type="journal article" date="1997" name="Hum. Mutat.">
        <title>Mutations in fibrillar collagens (types I, II, III, and XI), fibril-associated collagen (type IX), and network-forming collagen (type X) cause a spectrum of diseases of bone, cartilage, and blood vessels.</title>
        <authorList>
            <person name="Kuivaniemi H."/>
            <person name="Tromp G."/>
            <person name="Prockop D.J."/>
        </authorList>
    </citation>
    <scope>REVIEW ON VARIANTS</scope>
</reference>
<reference key="28">
    <citation type="journal article" date="2009" name="Eur. J. Hum. Genet.">
        <title>Homozygosity for a null allele of COL3A1 results in recessive Ehlers-Danlos syndrome.</title>
        <authorList>
            <person name="Plancke A."/>
            <person name="Holder-Espinasse M."/>
            <person name="Rigau V."/>
            <person name="Manouvrier S."/>
            <person name="Claustres M."/>
            <person name="Khau Van Kien P."/>
        </authorList>
    </citation>
    <scope>INVOLVEMENT IN PMGEDSV</scope>
</reference>
<reference key="29">
    <citation type="journal article" date="2015" name="Eur. J. Hum. Genet.">
        <title>Vascular Ehlers-Danlos Syndrome in siblings with biallelic COL3A1 sequence variants and marked clinical variability in the extended family.</title>
        <authorList>
            <person name="Joergensen A."/>
            <person name="Fagerheim T."/>
            <person name="Rand-Hendriksen S."/>
            <person name="Lunde P.I."/>
            <person name="Vorren T.O."/>
            <person name="Pepin M.G."/>
            <person name="Leistritz D.F."/>
            <person name="Byers P.H."/>
        </authorList>
    </citation>
    <scope>INVOLVEMENT IN PMGEDSV</scope>
    <scope>VARIANTS PMGEDSV 596-ARG--LEU-1466 DEL AND GLU-1284</scope>
</reference>
<reference key="30">
    <citation type="journal article" date="2017" name="Am. J. Med. Genet. A">
        <title>Biallelic COL3A1 mutations result in a clinical spectrum of specific structural brain anomalies and connective tissue abnormalities.</title>
        <authorList>
            <person name="Horn D."/>
            <person name="Siebert E."/>
            <person name="Seidel U."/>
            <person name="Rost I."/>
            <person name="Mayer K."/>
            <person name="Abou Jamra R."/>
            <person name="Mitter D."/>
            <person name="Kornak U."/>
        </authorList>
    </citation>
    <scope>INVOLVEMENT IN PMGEDSV</scope>
    <scope>VARIANTS PMGEDSV ALA-49 AND 428-ARG--LEU-1466 DEL</scope>
</reference>
<reference key="31">
    <citation type="journal article" date="2017" name="J. Med. Genet.">
        <title>Bi-allelic variants in COL3A1 encoding the ligand to GPR56 are associated with cobblestone-like cortical malformation, white matter changes and cerebellar cysts.</title>
        <authorList>
            <person name="Vandervore L."/>
            <person name="Stouffs K."/>
            <person name="Tanyalcin I."/>
            <person name="Vanderhasselt T."/>
            <person name="Roelens F."/>
            <person name="Holder-Espinasse M."/>
            <person name="Joergensen A."/>
            <person name="Pepin M.G."/>
            <person name="Petit F."/>
            <person name="Khau Van Kien P."/>
            <person name="Bahi-Buisson N."/>
            <person name="Lissens W."/>
            <person name="Gheldof A."/>
            <person name="Byers P.H."/>
            <person name="Jansen A.C."/>
        </authorList>
    </citation>
    <scope>INTERACTION WITH ADGRG1</scope>
    <scope>INVOLVEMENT IN PMGEDSV</scope>
    <scope>VARIANT PMGEDSV ALA-49</scope>
    <scope>CHARACTERIZATION OF VARIANT PMGEDSV ALA-49</scope>
</reference>
<reference key="32">
    <citation type="journal article" date="2012" name="J. Proteome Res.">
        <title>Resveratrol-induced changes of the human adipocyte secretion profile.</title>
        <authorList>
            <person name="Rosenow A."/>
            <person name="Noben J.P."/>
            <person name="Jocken J."/>
            <person name="Kallendrusch S."/>
            <person name="Fischer-Posovszky P."/>
            <person name="Mariman E.C."/>
            <person name="Renes J."/>
        </authorList>
    </citation>
    <scope>IDENTIFICATION BY MASS SPECTROMETRY [LARGE SCALE ANALYSIS]</scope>
</reference>
<reference key="33">
    <citation type="journal article" date="2014" name="J. Proteomics">
        <title>An enzyme assisted RP-RPLC approach for in-depth analysis of human liver phosphoproteome.</title>
        <authorList>
            <person name="Bian Y."/>
            <person name="Song C."/>
            <person name="Cheng K."/>
            <person name="Dong M."/>
            <person name="Wang F."/>
            <person name="Huang J."/>
            <person name="Sun D."/>
            <person name="Wang L."/>
            <person name="Ye M."/>
            <person name="Zou H."/>
        </authorList>
    </citation>
    <scope>IDENTIFICATION BY MASS SPECTROMETRY [LARGE SCALE ANALYSIS]</scope>
    <source>
        <tissue>Liver</tissue>
    </source>
</reference>
<reference key="34">
    <citation type="journal article" date="2008" name="J. Biol. Chem.">
        <title>Crystal structure of human type III collagen Gly991-Gly1032 cystine knot-containing peptide shows both 7/2 and 10/3 triple helical symmetries.</title>
        <authorList>
            <person name="Boudko S.P."/>
            <person name="Engel J."/>
            <person name="Okuyama K."/>
            <person name="Mizuno K."/>
            <person name="Bachinger H.P."/>
            <person name="Schumacher M.A."/>
        </authorList>
    </citation>
    <scope>X-RAY CRYSTALLOGRAPHY (2.3 ANGSTROMS) OF 1158-1199</scope>
    <scope>INTERCHAIN DISULFIDE BONDS</scope>
</reference>
<reference key="35">
    <citation type="journal article" date="2012" name="Nat. Struct. Mol. Biol.">
        <title>Structural basis of fibrillar collagen trimerization and related genetic disorders.</title>
        <authorList>
            <person name="Bourhis J.M."/>
            <person name="Mariano N."/>
            <person name="Zhao Y."/>
            <person name="Harlos K."/>
            <person name="Exposito J.Y."/>
            <person name="Jones E.Y."/>
            <person name="Moali C."/>
            <person name="Aghajari N."/>
            <person name="Hulmes D.J."/>
        </authorList>
    </citation>
    <scope>X-RAY CRYSTALLOGRAPHY (1.68 ANGSTROMS) OF 1222-1466</scope>
    <scope>PROPEPTIDE</scope>
    <scope>DISULFIDE BONDS</scope>
    <scope>CALCIUM-BINDING SITES</scope>
</reference>
<reference key="36">
    <citation type="journal article" date="1993" name="J. Clin. Invest.">
        <title>Sequencing of cDNA from 50 unrelated patients reveals that mutations in the triple-helical domain of type III procollagen are an infrequent cause of aortic aneurysms.</title>
        <authorList>
            <person name="Tromp G."/>
            <person name="Wu Y."/>
            <person name="Prockop D.J."/>
            <person name="Madhatheri S.L."/>
            <person name="Kleinert C."/>
            <person name="Earley J.J."/>
            <person name="Zhuang J."/>
            <person name="Noerrgaard O."/>
            <person name="Darling R.C."/>
            <person name="Abbott W.M."/>
            <person name="Cole C.W."/>
            <person name="Jaakkola P."/>
            <person name="Ryynaenen M."/>
            <person name="Pearce W.H."/>
            <person name="Yao J.S.T."/>
            <person name="Majamaa K."/>
            <person name="Smullens S.N."/>
            <person name="Gatalica Z."/>
            <person name="Ferrell R.E."/>
            <person name="Jimenez S.A."/>
            <person name="Jackson C.E."/>
            <person name="Michels V.V."/>
            <person name="Kaye M."/>
            <person name="Kuivaniemi H."/>
        </authorList>
    </citation>
    <scope>VARIANT EDSVASC ARG-303</scope>
    <scope>VARIANT THR-668</scope>
</reference>
<reference key="37">
    <citation type="journal article" date="1990" name="Nucleic Acids Res.">
        <title>G to A polymorphism in exon 31 of the COL3A1 gene.</title>
        <authorList>
            <person name="Zafarullah K."/>
            <person name="Kleinert C."/>
            <person name="Tromp G."/>
            <person name="Kuivaniemi H."/>
            <person name="Kontusaari S."/>
            <person name="Wu Y."/>
            <person name="Ganguly A."/>
            <person name="Prockop D.J."/>
        </authorList>
    </citation>
    <scope>VARIANT THR-698</scope>
</reference>
<reference key="38">
    <citation type="journal article" date="1990" name="J. Clin. Invest.">
        <title>A mutation in the gene for type III procollagen (COL3A1) in a family with aortic aneurysms.</title>
        <authorList>
            <person name="Kontusaari S."/>
            <person name="Tromp G."/>
            <person name="Kuivaniemi H."/>
            <person name="Romanic A.M."/>
            <person name="Prockop D.J."/>
        </authorList>
    </citation>
    <scope>VARIANT EDSVASC ARG-786</scope>
</reference>
<reference key="39">
    <citation type="journal article" date="1992" name="Hum. Genet.">
        <title>A 27-bp deletion from one allele of the type III collagen gene (COL3A1) in a large family with Ehlers-Danlos syndrome type IV.</title>
        <authorList>
            <person name="Richards A.J."/>
            <person name="Lloyd J.C."/>
            <person name="Narcisi P."/>
            <person name="Ward P.N."/>
            <person name="Nicholls A.C."/>
            <person name="De Paepe A."/>
            <person name="Pope F.M."/>
        </authorList>
    </citation>
    <scope>VARIANT EDSVASC 830-PRO--PRO-838 DEL</scope>
</reference>
<reference key="40">
    <citation type="journal article" date="1993" name="J. Med. Genet.">
        <title>The substitution of glycine 661 by arginine in type III collagen produces mutant molecules with different thermal stabilities and causes Ehlers-Danlos syndrome type IV.</title>
        <authorList>
            <person name="Richards A.J."/>
            <person name="Narcisi P."/>
            <person name="Lloyd J.C."/>
            <person name="Ferguson C."/>
            <person name="Pope F.M."/>
        </authorList>
    </citation>
    <scope>VARIANT EDSVASC ARG-828</scope>
</reference>
<reference key="41">
    <citation type="journal article" date="1989" name="J. Biol. Chem.">
        <title>A single base mutation that substitutes serine for glycine 790 of the alpha 1 (III) chain of type III procollagen exposes an arginine and causes Ehlers-Danlos syndrome IV.</title>
        <authorList>
            <person name="Tromp G."/>
            <person name="Kuivaniemi H."/>
            <person name="Shikata H."/>
            <person name="Prockop D.J."/>
        </authorList>
    </citation>
    <scope>VARIANT EDSVASC SER-957</scope>
</reference>
<reference key="42">
    <citation type="journal article" date="1995" name="Hum. Mutat.">
        <title>Substitution of valine for glycine 793 in type III procollagen in Ehlers-Danlos syndrome type IV.</title>
        <authorList>
            <person name="Tromp G."/>
            <person name="de Paepe A."/>
            <person name="Nuytinck L."/>
            <person name="Madhatheri S.L."/>
            <person name="Kuivaniemi H."/>
        </authorList>
    </citation>
    <scope>VARIANT EDSVASC VAL-960</scope>
</reference>
<reference key="43">
    <citation type="journal article" date="1992" name="Hum. Genet.">
        <title>A single base mutation in the gene for type III collagen (COL3A1) converts glycine 847 to glutamic acid in a family with Ehlers-Danlos syndrome type IV. An unaffected family member is mosaic for the mutation.</title>
        <authorList>
            <person name="Richards A.J."/>
            <person name="Ward P.N."/>
            <person name="Narcisi P."/>
            <person name="Nicholls A.C."/>
            <person name="Lloyd J.C."/>
            <person name="Pope F.M."/>
        </authorList>
    </citation>
    <scope>VARIANT EDSVASC GLU-1014</scope>
</reference>
<reference key="44">
    <citation type="journal article" date="1989" name="J. Biol. Chem.">
        <title>Single base mutation in the type III procollagen gene that converts the codon for glycine 883 to aspartate in a mild variant of Ehlers-Danlos syndrome IV.</title>
        <authorList>
            <person name="Tromp G."/>
            <person name="Kuivaniemi H."/>
            <person name="Stolle C.A."/>
            <person name="Pope F.M."/>
            <person name="Prockop D.J."/>
        </authorList>
    </citation>
    <scope>VARIANT EDSVASC ASP-1050</scope>
</reference>
<reference key="45">
    <citation type="journal article" date="1990" name="Am. J. Hum. Genet.">
        <title>Inheritance of an RNA splicing mutation (G+ 1 IVS20) in the type III procollagen gene (COL3A1) in a family having aortic aneurysms and easy bruisability: phenotypic overlap between familial arterial aneurysms and Ehlers-Danlos syndrome type IV.</title>
        <authorList>
            <person name="Kontusaari S."/>
            <person name="Tromp G."/>
            <person name="Kuivaniemi H."/>
            <person name="Ladda R.L."/>
            <person name="Prockop D.J."/>
        </authorList>
    </citation>
    <scope>INVOLVEMENT IN EDSVASC</scope>
</reference>
<reference key="46">
    <citation type="journal article" date="1991" name="J. Med. Genet.">
        <title>Characterisation of a glycine to valine substitution at amino acid position 910 of the triple helical region of type III collagen in a patient with Ehlers-Danlos syndrome type IV.</title>
        <authorList>
            <person name="Richards A.J."/>
            <person name="Lloyd J.C."/>
            <person name="Ward P.N."/>
            <person name="de Paepe A."/>
            <person name="Narcisi P."/>
            <person name="Pope F.M."/>
        </authorList>
    </citation>
    <scope>VARIANT EDSVASC VAL-1077</scope>
</reference>
<reference key="47">
    <citation type="journal article" date="1992" name="J. Inherit. Metab. Dis.">
        <title>A COL3A1 glycine 1006 to glutamic acid substitution in a patient with Ehlers-Danlos syndrome type IV detected by denaturing gradient gel electrophoresis.</title>
        <authorList>
            <person name="Johnson P.H."/>
            <person name="Richards A.J."/>
            <person name="Pope F.M."/>
            <person name="Hopkinson D.A."/>
        </authorList>
    </citation>
    <scope>VARIANT EDSVASC GLU-1173</scope>
</reference>
<reference key="48">
    <citation type="journal article" date="1992" name="Am. J. Hum. Genet.">
        <title>Substitution of aspartate for glycine 1018 in the type III procollagen (COL3A1) gene causes type IV Ehlers-Danlos syndrome: the mutated allele is present in most blood leukocytes of the asymptomatic and mosaic mother.</title>
        <authorList>
            <person name="Kontusaari S."/>
            <person name="Tromp G."/>
            <person name="Kuivaniemi H."/>
            <person name="Stolle C.A."/>
            <person name="Pope F.M."/>
            <person name="Prockop D.J."/>
        </authorList>
    </citation>
    <scope>VARIANT EDSVASC ASP-1185</scope>
</reference>
<reference key="49">
    <citation type="journal article" date="1993" name="Am. J. Med. Genet.">
        <title>Single base mutation that substitutes glutamic acid for glycine 1021 in the COL3A1 gene and causes Ehlers-Danlos syndrome type IV.</title>
        <authorList>
            <person name="Narcisi P."/>
            <person name="Wu Y."/>
            <person name="Tromp G."/>
            <person name="Earley J.J."/>
            <person name="Richards A.J."/>
            <person name="Pope F.M."/>
            <person name="Kuivaniemi H."/>
        </authorList>
    </citation>
    <scope>VARIANT EDSVASC GLU-1188</scope>
</reference>
<reference key="50">
    <citation type="journal article" date="1993" name="Matrix">
        <title>Substitution of glycines 1000, 1003 and 1006 in type III collagen all cause the acrogeric form of EDS-IV, and destabilise the collagen triple helix.</title>
        <authorList>
            <person name="Richards A.J."/>
            <person name="Narcisi P."/>
            <person name="Lloyd J.C."/>
            <person name="Johnson P.H."/>
            <person name="Hopkinson D.A."/>
            <person name="Pope F.M."/>
        </authorList>
    </citation>
    <scope>VARIANTS EDSVASC VAL-1167; ASP-1170 AND GLU-1173</scope>
</reference>
<reference key="51">
    <citation type="journal article" date="1993" name="Neurology">
        <title>Exclusion of mutations in the gene for type III collagen (COL3A1) as a common cause of intracranial aneurysms or cervical artery dissections: results from sequence analysis of the coding sequences of type III collagen from 55 unrelated patients.</title>
        <authorList>
            <person name="Kuivaniemi H."/>
            <person name="Prockop D.J."/>
            <person name="Wu Y."/>
            <person name="Madhatheri S.L."/>
            <person name="Kleinert C."/>
            <person name="Earley J.J."/>
            <person name="Jokinen A."/>
            <person name="Stolle C.A."/>
            <person name="Majamaa K."/>
            <person name="Mylllylae V.V."/>
            <person name="Noerrgaard O."/>
            <person name="Schievink W.I."/>
            <person name="Mokri B."/>
            <person name="Fukawa O."/>
            <person name="Ter Berg J.W.M."/>
            <person name="de Paepe A."/>
            <person name="Lozano A.M."/>
            <person name="Leblanc R."/>
            <person name="Ryynaenen M."/>
            <person name="Baxter B.T."/>
            <person name="Shikata H."/>
            <person name="Ferrell R.E."/>
            <person name="Tromp G."/>
        </authorList>
    </citation>
    <scope>VARIANTS THR-602 AND LEU-635</scope>
</reference>
<reference key="52">
    <citation type="journal article" date="1994" name="Hum. Mol. Genet.">
        <title>Substitution of glutamic acid for glycine 589 in the triple-helical domain of type III procollagen (COL3A1) in a family with variable phenotype of the Ehlers-Danlos syndrome type IV.</title>
        <authorList>
            <person name="Madhatheri S.L."/>
            <person name="Tromp G."/>
            <person name="Gustavson K.H."/>
            <person name="Kuivaniemi H."/>
        </authorList>
    </citation>
    <scope>VARIANT EDSVASC GLU-756</scope>
</reference>
<reference key="53">
    <citation type="journal article" date="1994" name="Hum. Mol. Genet.">
        <title>A family with Ehlers-Danlos syndrome type III/articular hypermobility syndrome has a glycine 637-to-serine substitution in type III collagen.</title>
        <authorList>
            <person name="Narcisi P."/>
            <person name="Richards A.J."/>
            <person name="Ferguson S.D."/>
            <person name="Pope F.M."/>
        </authorList>
    </citation>
    <scope>VARIANT EDSVASC SER-804</scope>
</reference>
<reference key="54">
    <citation type="journal article" date="1994" name="Hum. Mutat.">
        <title>Single-strand conformation polymorphism (SSCP) analysis of the COL3A1 gene detects a mutation that results in the substitution of glycine 1009 to valine and causes severe Ehlers-Danlos syndrome type IV.</title>
        <authorList>
            <person name="Nuytinck L."/>
            <person name="De Paepe A."/>
            <person name="Renard J.P."/>
            <person name="Adriaens F."/>
            <person name="Leroy J."/>
        </authorList>
    </citation>
    <scope>VARIANT EDSVASC VAL-1176</scope>
</reference>
<reference key="55">
    <citation type="journal article" date="1994" name="Matrix Biol.">
        <title>Marked heterogeneity in COL3A1 mutations that produce the EDS type IV phenotype.</title>
        <authorList>
            <person name="Goldstein J.A."/>
            <person name="Schwarze U."/>
            <person name="Witz A."/>
            <person name="Byers P.H."/>
        </authorList>
    </citation>
    <scope>VARIANTS EDSVASC CYS-183; ARG-201; GLU-228; ARG-540; ARG-936; GLU-996; VAL-1071; ALA-1104; GLU-1182; VAL-1185; GLU-1188 AND ARG-1188</scope>
</reference>
<reference key="56">
    <citation type="journal article" date="1995" name="Hum. Mutat.">
        <title>Efficient strategy for the detection of mutations in acrogeric Ehlers-Danlos syndrome type IV.</title>
        <authorList>
            <person name="Johnson P.H."/>
            <person name="Richards A.J."/>
            <person name="Lloyd J.C."/>
            <person name="Pope F.M."/>
            <person name="Hopkinson D.A."/>
        </authorList>
    </citation>
    <scope>VARIANTS EDSVASC ASP-909 AND ASP-939</scope>
</reference>
<reference key="57">
    <citation type="journal article" date="1996" name="Clin. Genet.">
        <title>Ehlers-Danlos syndrome type IV caused by Gly400Glu, Gly595Cys and Gly1003Asp substitutions in collagen III: clinical features, biochemical screening, and molecular confirmation.</title>
        <authorList>
            <person name="Mackay K."/>
            <person name="Raghunath M."/>
            <person name="Superti-Furga A."/>
            <person name="Steinmann B."/>
            <person name="Dalgleish R."/>
        </authorList>
    </citation>
    <scope>VARIANTS EDSVASC GLU-567; CYS-762 AND ASP-1170</scope>
</reference>
<reference key="58">
    <citation type="journal article" date="1996" name="Clin. Genet.">
        <title>Abnormal extracellular matrix in Ehlers-Danlos syndrome type IV due to the substitution of glycine 934 by glutamic acid in the triple helical domain of type III collagen.</title>
        <authorList>
            <person name="McGrory J."/>
            <person name="Weksberg R."/>
            <person name="Thorner P."/>
            <person name="Cole W.G."/>
        </authorList>
    </citation>
    <scope>VARIANT EDSVASC GLU-1101</scope>
</reference>
<reference key="59">
    <citation type="journal article" date="1996" name="Hum. Mutat.">
        <title>A novel G499D substitution in the alpha 1(III) chain of type III collagen produces variable forms of Ehlers-Danlos syndrome type IV.</title>
        <authorList>
            <person name="McGrory J."/>
            <person name="Costa T."/>
            <person name="Cole W.G."/>
        </authorList>
    </citation>
    <scope>VARIANT EDSVASC ASP-666</scope>
</reference>
<reference key="60">
    <citation type="journal article" date="1997" name="Hum. Mutat.">
        <title>A glycine (415)-to-serine substitution results in impaired secretion and decreased thermal stability of type III procollagen in a patient with Ehlers-Danlos syndrome type IV.</title>
        <authorList>
            <person name="Anderson D.W."/>
            <person name="Thakker-Varia S."/>
            <person name="Tromp G."/>
            <person name="Kuivaniemi H."/>
            <person name="Stolle C.A."/>
        </authorList>
    </citation>
    <scope>VARIANT EDSVASC SER-582</scope>
</reference>
<reference key="61">
    <citation type="journal article" date="1997" name="J. Invest. Dermatol.">
        <title>Mutations in the COL3A1 gene result in the Ehlers-Danlos syndrome type IV and alterations in the size and distribution of the major collagen fibrils of the dermis.</title>
        <authorList>
            <person name="Smith L.T."/>
            <person name="Schwarze U."/>
            <person name="Goldstein J."/>
            <person name="Byers P.H."/>
        </authorList>
    </citation>
    <scope>VARIANTS EDSVASC CYS-183; ARG-201; GLU-228; ARG-540; ARG-936 AND ARG-1179</scope>
</reference>
<reference key="62">
    <citation type="journal article" date="1998" name="Hum. Mutat. Suppl.">
        <title>A type III collagen Gly559 to Arg helix mutation in Ehler's-Danlos syndrome type IV.</title>
        <authorList>
            <person name="Bateman J.F."/>
            <person name="Chiodo A.A."/>
            <person name="Weng Y.M."/>
            <person name="Chan D."/>
            <person name="Haan E."/>
        </authorList>
    </citation>
    <scope>VARIANT EDSVASC ARG-726</scope>
</reference>
<reference key="63">
    <citation type="journal article" date="1999" name="Am. J. Med. Genet.">
        <title>Large kindred with Ehlers-Danlos syndrome type IV due to a point mutation (G571S) in the COL3A1 gene of type III procollagen: low risk of pregnancy complications and unexpected longevity in some affected relatives.</title>
        <authorList>
            <person name="Gilchrist D."/>
            <person name="Schwarze U."/>
            <person name="Shields K."/>
            <person name="MacLaren L."/>
            <person name="Bridge P.J."/>
            <person name="Byers P.H."/>
        </authorList>
    </citation>
    <scope>VARIANT EDSVASC SER-738</scope>
</reference>
<reference key="64">
    <citation type="journal article" date="2000" name="Br. J. Dermatol.">
        <title>COL3A1 mutation leading to acrogeria (Gottron Type).</title>
        <authorList>
            <person name="Jansen T."/>
            <person name="de Paepe A."/>
            <person name="Luytinck N."/>
            <person name="Plewig G."/>
        </authorList>
    </citation>
    <scope>VARIANT EDS-IV ARG-1173</scope>
</reference>
<reference key="65">
    <citation type="journal article" date="2000" name="Hum. Mutat.">
        <title>Characterization of 11 new mutations in COL3A1 of individuals with Ehlers-Danlos syndrome type IV: preliminary comparison of RNase cleavage, EMC and DHPLC assays.</title>
        <authorList>
            <person name="Giunta C."/>
            <person name="Steinmann B."/>
        </authorList>
    </citation>
    <scope>VARIANTS EDSVASC ASP-204; ASP-210; ARG-264; ASP-327; ASP-1098 AND GLU-1173</scope>
</reference>
<reference key="66">
    <citation type="journal article" date="2000" name="N. Engl. J. Med.">
        <title>Clinical and genetic features of Ehlers-Danlos syndrome type IV, the vascular type.</title>
        <authorList>
            <person name="Pepin M."/>
            <person name="Schwarze U."/>
            <person name="Superti-Furga A."/>
            <person name="Byers P.H."/>
        </authorList>
    </citation>
    <scope>VARIANTS EDSVASC</scope>
    <scope>VARIANTS EDSVASC ASP-183; SER-183; VAL-192; CYS-219; VAL-225; ARG-240; VAL-243; ASP-249; VAL-249; ASP-252; ARG-252; VAL-252; VAL-255; VAL-267; VAL-321; ARG-345; ARG-417; ARG-444; GLU-489; ARG-501; VAL-519; GLU-549; GLU-552; ASP-588; ARG-636; GLU-657; ASP-660; ARG-699; VAL-738; VAL-744; TRP-828; CYS-852; VAL-879; ASP-882; ASP-900; GLU-903; VAL-909; GLU-918; CYS-924; GLU-942; VAL-966; ALA-972; THR-984; ARG-999; GLU-1011; VAL-1032; CYS-1035; ASP-1089; VAL-1098; VAL-1161; ARG-1164; GLU-1164 AND VAL-1170</scope>
</reference>
<reference key="67">
    <citation type="journal article" date="2001" name="J. Intern. Med.">
        <title>Ehlers-Danlos syndrome type IV with a unique point mutation in COL3A1 and familial phenotype of myocardial infarction without organic coronary stenosis.</title>
        <authorList>
            <person name="Nishiyama Y."/>
            <person name="Nejima J."/>
            <person name="Watanabe A."/>
            <person name="Kotani E."/>
            <person name="Sakai N."/>
            <person name="Hatamochi A."/>
            <person name="Shinkai H."/>
            <person name="Kiuchi K."/>
            <person name="Tamura K."/>
            <person name="Shimada T."/>
            <person name="Takano T."/>
            <person name="Katayama Y."/>
        </authorList>
    </citation>
    <scope>VARIANT EDSVASC ASP-1044</scope>
</reference>
<reference key="68">
    <citation type="journal article" date="2003" name="Clin. Genet.">
        <title>Ehlers-Danlos syndrome type IV: unusual congenital anomalies in a mother and son with a COL3A1 mutation and a normal collagen III protein profile.</title>
        <authorList>
            <person name="Kroes H.Y."/>
            <person name="Pals G."/>
            <person name="van Essen A.J."/>
        </authorList>
    </citation>
    <scope>VARIANT EDSVASC ARG-297</scope>
</reference>
<reference key="69">
    <citation type="journal article" date="2003" name="Clin. Genet.">
        <authorList>
            <person name="Kroes H.Y."/>
            <person name="Pals G."/>
            <person name="van Essen A.J."/>
        </authorList>
    </citation>
    <scope>ERRATUM OF PUBMED:12694234</scope>
</reference>
<reference key="70">
    <citation type="journal article" date="2003" name="Clin. Genet.">
        <title>Neurological presentation of Ehlers-Danlos syndrome type IV in a family with parental mosaicism.</title>
        <authorList>
            <person name="Palmeri S."/>
            <person name="Mari F."/>
            <person name="Meloni I."/>
            <person name="Malandrini A."/>
            <person name="Ariani F."/>
            <person name="Villanova M."/>
            <person name="Pompilio A."/>
            <person name="Schwarze U."/>
            <person name="Byers P.H."/>
            <person name="Renieri A."/>
        </authorList>
    </citation>
    <scope>VARIANT EDSVASC VAL-1050</scope>
</reference>
<reference key="71">
    <citation type="journal article" date="2006" name="Science">
        <title>The consensus coding sequences of human breast and colorectal cancers.</title>
        <authorList>
            <person name="Sjoeblom T."/>
            <person name="Jones S."/>
            <person name="Wood L.D."/>
            <person name="Parsons D.W."/>
            <person name="Lin J."/>
            <person name="Barber T.D."/>
            <person name="Mandelker D."/>
            <person name="Leary R.J."/>
            <person name="Ptak J."/>
            <person name="Silliman N."/>
            <person name="Szabo S."/>
            <person name="Buckhaults P."/>
            <person name="Farrell C."/>
            <person name="Meeh P."/>
            <person name="Markowitz S.D."/>
            <person name="Willis J."/>
            <person name="Dawson D."/>
            <person name="Willson J.K.V."/>
            <person name="Gazdar A.F."/>
            <person name="Hartigan J."/>
            <person name="Wu L."/>
            <person name="Liu C."/>
            <person name="Parmigiani G."/>
            <person name="Park B.H."/>
            <person name="Bachman K.E."/>
            <person name="Papadopoulos N."/>
            <person name="Vogelstein B."/>
            <person name="Kinzler K.W."/>
            <person name="Velculescu V.E."/>
        </authorList>
    </citation>
    <scope>VARIANTS [LARGE SCALE ANALYSIS] SER-420 AND CYS-1434</scope>
</reference>
<reference key="72">
    <citation type="journal article" date="2008" name="Genomics">
        <title>Natural variation in four human collagen genes across an ethnically diverse population.</title>
        <authorList>
            <person name="Chan T.F."/>
            <person name="Poon A."/>
            <person name="Basu A."/>
            <person name="Addleman N.R."/>
            <person name="Chen J."/>
            <person name="Phong A."/>
            <person name="Byers P.H."/>
            <person name="Klein T.E."/>
            <person name="Kwok P.Y."/>
        </authorList>
    </citation>
    <scope>VARIANTS THR-679; THR-698; VAL-1205 AND GLN-1353</scope>
</reference>
<reference key="73">
    <citation type="journal article" date="2011" name="Forensic Sci. Med. Pathol.">
        <title>Traumatic subarachnoid hemorrhage and the COL3A1 gene: emergence of a potential causal link.</title>
        <authorList>
            <person name="Pickup M.J."/>
            <person name="Pollanen M.S."/>
        </authorList>
    </citation>
    <scope>VARIANTS EDSVASC GLN-271; SER-420; GLU-930 AND ARG-1313</scope>
</reference>
<proteinExistence type="evidence at protein level"/>
<sequence>MMSFVQKGSWLLLALLHPTIILAQQEAVEGGCSHLGQSYADRDVWKPEPCQICVCDSGSVLCDDIICDDQELDCPNPEIPFGECCAVCPQPPTAPTRPPNGQGPQGPKGDPGPPGIPGRNGDPGIPGQPGSPGSPGPPGICESCPTGPQNYSPQYDSYDVKSGVAVGGLAGYPGPAGPPGPPGPPGTSGHPGSPGSPGYQGPPGEPGQAGPSGPPGPPGAIGPSGPAGKDGESGRPGRPGERGLPGPPGIKGPAGIPGFPGMKGHRGFDGRNGEKGETGAPGLKGENGLPGENGAPGPMGPRGAPGERGRPGLPGAAGARGNDGARGSDGQPGPPGPPGTAGFPGSPGAKGEVGPAGSPGSNGAPGQRGEPGPQGHAGAQGPPGPPGINGSPGGKGEMGPAGIPGAPGLMGARGPPGPAGANGAPGLRGGAGEPGKNGAKGEPGPRGERGEAGIPGVPGAKGEDGKDGSPGEPGANGLPGAAGERGAPGFRGPAGPNGIPGEKGPAGERGAPGPAGPRGAAGEPGRDGVPGGPGMRGMPGSPGGPGSDGKPGPPGSQGESGRPGPPGPSGPRGQPGVMGFPGPKGNDGAPGKNGERGGPGGPGPQGPPGKNGETGPQGPPGPTGPGGDKGDTGPPGPQGLQGLPGTGGPPGENGKPGEPGPKGDAGAPGAPGGKGDAGAPGERGPPGLAGAPGLRGGAGPPGPEGGKGAAGPPGPPGAAGTPGLQGMPGERGGLGSPGPKGDKGEPGGPGADGVPGKDGPRGPTGPIGPPGPAGQPGDKGEGGAPGLPGIAGPRGSPGERGETGPPGPAGFPGAPGQNGEPGGKGERGAPGEKGEGGPPGVAGPPGGSGPAGPPGPQGVKGERGSPGGPGAAGFPGARGLPGPPGSNGNPGPPGPSGSPGKDGPPGPAGNTGAPGSPGVSGPKGDAGQPGEKGSPGAQGPPGAPGPLGIAGITGARGLAGPPGMPGPRGSPGPQGVKGESGKPGANGLSGERGPPGPQGLPGLAGTAGEPGRDGNPGSDGLPGRDGSPGGKGDRGENGSPGAPGAPGHPGPPGPVGPAGKSGDRGESGPAGPAGAPGPAGSRGAPGPQGPRGDKGETGERGAAGIKGHRGFPGNPGAPGSPGPAGQQGAIGSPGPAGPRGPVGPSGPPGKDGTSGHPGPIGPPGPRGNRGERGSEGSPGHPGQPGPPGPPGAPGPCCGGVGAAAIAGIGGEKAGGFAPYYGDEPMDFKINTDEIMTSLKSVNGQIESLISPDGSRKNPARNCRDLKFCHPELKSGEYWVDPNQGCKLDAIKVFCNMETGETCISANPLNVPRKHWWTDSSAEKKHVWFGESMDGGFQFSYGNPELPEDVLDVHLAFLRLLSSRASQNITYHCKNSIAYMDQASGNVKKALKLMGSNEGEFKAEGNSKFTYTVLEDGCTKHTGEWSKTVFEYRTRKAVRLPIVDIAPYDIGGPDQEFGVDVGPVCFL</sequence>
<feature type="signal peptide">
    <location>
        <begin position="1"/>
        <end position="23"/>
    </location>
</feature>
<feature type="propeptide" id="PRO_0000005740" description="N-terminal propeptide">
    <location>
        <begin position="24"/>
        <end position="153"/>
    </location>
</feature>
<feature type="chain" id="PRO_0000005741" description="Collagen alpha-1(III) chain">
    <location>
        <begin position="154"/>
        <end position="1221"/>
    </location>
</feature>
<feature type="propeptide" id="PRO_0000005742" description="C-terminal propeptide">
    <location>
        <begin position="1222"/>
        <end position="1466"/>
    </location>
</feature>
<feature type="domain" description="VWFC" evidence="1">
    <location>
        <begin position="30"/>
        <end position="89"/>
    </location>
</feature>
<feature type="domain" description="Fibrillar collagen NC1" evidence="2">
    <location>
        <begin position="1232"/>
        <end position="1466"/>
    </location>
</feature>
<feature type="region of interest" description="Disordered" evidence="3">
    <location>
        <begin position="95"/>
        <end position="1194"/>
    </location>
</feature>
<feature type="region of interest" description="Nonhelical region (N-terminal)">
    <location>
        <begin position="149"/>
        <end position="167"/>
    </location>
</feature>
<feature type="region of interest" description="Triple-helical region">
    <location>
        <begin position="168"/>
        <end position="1196"/>
    </location>
</feature>
<feature type="region of interest" description="Nonhelical region (C-terminal)">
    <location>
        <begin position="1197"/>
        <end position="1205"/>
    </location>
</feature>
<feature type="compositionally biased region" description="Low complexity" evidence="3">
    <location>
        <begin position="99"/>
        <end position="108"/>
    </location>
</feature>
<feature type="compositionally biased region" description="Polar residues" evidence="3">
    <location>
        <begin position="146"/>
        <end position="155"/>
    </location>
</feature>
<feature type="compositionally biased region" description="Pro residues" evidence="3">
    <location>
        <begin position="175"/>
        <end position="185"/>
    </location>
</feature>
<feature type="compositionally biased region" description="Low complexity" evidence="3">
    <location>
        <begin position="187"/>
        <end position="199"/>
    </location>
</feature>
<feature type="compositionally biased region" description="Basic and acidic residues" evidence="3">
    <location>
        <begin position="229"/>
        <end position="241"/>
    </location>
</feature>
<feature type="compositionally biased region" description="Low complexity" evidence="3">
    <location>
        <begin position="251"/>
        <end position="260"/>
    </location>
</feature>
<feature type="compositionally biased region" description="Basic and acidic residues" evidence="3">
    <location>
        <begin position="266"/>
        <end position="277"/>
    </location>
</feature>
<feature type="compositionally biased region" description="Low complexity" evidence="3">
    <location>
        <begin position="311"/>
        <end position="322"/>
    </location>
</feature>
<feature type="compositionally biased region" description="Low complexity" evidence="3">
    <location>
        <begin position="355"/>
        <end position="380"/>
    </location>
</feature>
<feature type="compositionally biased region" description="Gly residues" evidence="3">
    <location>
        <begin position="390"/>
        <end position="399"/>
    </location>
</feature>
<feature type="compositionally biased region" description="Low complexity" evidence="3">
    <location>
        <begin position="404"/>
        <end position="425"/>
    </location>
</feature>
<feature type="compositionally biased region" description="Gly residues" evidence="3">
    <location>
        <begin position="426"/>
        <end position="435"/>
    </location>
</feature>
<feature type="compositionally biased region" description="Low complexity" evidence="3">
    <location>
        <begin position="478"/>
        <end position="523"/>
    </location>
</feature>
<feature type="compositionally biased region" description="Gly residues" evidence="3">
    <location>
        <begin position="528"/>
        <end position="549"/>
    </location>
</feature>
<feature type="compositionally biased region" description="Gly residues" evidence="3">
    <location>
        <begin position="642"/>
        <end position="651"/>
    </location>
</feature>
<feature type="compositionally biased region" description="Gly residues" evidence="3">
    <location>
        <begin position="669"/>
        <end position="678"/>
    </location>
</feature>
<feature type="compositionally biased region" description="Low complexity" evidence="3">
    <location>
        <begin position="679"/>
        <end position="692"/>
    </location>
</feature>
<feature type="compositionally biased region" description="Gly residues" evidence="3">
    <location>
        <begin position="693"/>
        <end position="711"/>
    </location>
</feature>
<feature type="compositionally biased region" description="Gly residues" evidence="3">
    <location>
        <begin position="729"/>
        <end position="738"/>
    </location>
</feature>
<feature type="compositionally biased region" description="Low complexity" evidence="3">
    <location>
        <begin position="787"/>
        <end position="796"/>
    </location>
</feature>
<feature type="compositionally biased region" description="Basic and acidic residues" evidence="3">
    <location>
        <begin position="823"/>
        <end position="835"/>
    </location>
</feature>
<feature type="compositionally biased region" description="Gly residues" evidence="3">
    <location>
        <begin position="836"/>
        <end position="850"/>
    </location>
</feature>
<feature type="compositionally biased region" description="Gly residues" evidence="3">
    <location>
        <begin position="864"/>
        <end position="873"/>
    </location>
</feature>
<feature type="compositionally biased region" description="Pro residues" evidence="3">
    <location>
        <begin position="890"/>
        <end position="907"/>
    </location>
</feature>
<feature type="compositionally biased region" description="Low complexity" evidence="3">
    <location>
        <begin position="908"/>
        <end position="917"/>
    </location>
</feature>
<feature type="compositionally biased region" description="Low complexity" evidence="3">
    <location>
        <begin position="946"/>
        <end position="961"/>
    </location>
</feature>
<feature type="compositionally biased region" description="Pro residues" evidence="3">
    <location>
        <begin position="1046"/>
        <end position="1055"/>
    </location>
</feature>
<feature type="compositionally biased region" description="Low complexity" evidence="3">
    <location>
        <begin position="1067"/>
        <end position="1085"/>
    </location>
</feature>
<feature type="compositionally biased region" description="Low complexity" evidence="3">
    <location>
        <begin position="1123"/>
        <end position="1133"/>
    </location>
</feature>
<feature type="compositionally biased region" description="Pro residues" evidence="3">
    <location>
        <begin position="1181"/>
        <end position="1193"/>
    </location>
</feature>
<feature type="binding site">
    <location>
        <position position="1280"/>
    </location>
    <ligand>
        <name>Ca(2+)</name>
        <dbReference type="ChEBI" id="CHEBI:29108"/>
    </ligand>
</feature>
<feature type="binding site">
    <location>
        <position position="1282"/>
    </location>
    <ligand>
        <name>Ca(2+)</name>
        <dbReference type="ChEBI" id="CHEBI:29108"/>
    </ligand>
</feature>
<feature type="binding site">
    <location>
        <position position="1283"/>
    </location>
    <ligand>
        <name>Ca(2+)</name>
        <dbReference type="ChEBI" id="CHEBI:29108"/>
    </ligand>
</feature>
<feature type="binding site">
    <location>
        <position position="1285"/>
    </location>
    <ligand>
        <name>Ca(2+)</name>
        <dbReference type="ChEBI" id="CHEBI:29108"/>
    </ligand>
</feature>
<feature type="binding site">
    <location>
        <position position="1288"/>
    </location>
    <ligand>
        <name>Ca(2+)</name>
        <dbReference type="ChEBI" id="CHEBI:29108"/>
    </ligand>
</feature>
<feature type="modified residue" description="4-hydroxyproline" evidence="34">
    <location>
        <position position="173"/>
    </location>
</feature>
<feature type="modified residue" description="4-hydroxyproline" evidence="34">
    <location>
        <position position="179"/>
    </location>
</feature>
<feature type="modified residue" description="4-hydroxyproline" evidence="34">
    <location>
        <position position="182"/>
    </location>
</feature>
<feature type="modified residue" description="4-hydroxyproline" evidence="34">
    <location>
        <position position="185"/>
    </location>
</feature>
<feature type="modified residue" description="4-hydroxyproline" evidence="34">
    <location>
        <position position="191"/>
    </location>
</feature>
<feature type="modified residue" description="4-hydroxyproline" evidence="34">
    <location>
        <position position="194"/>
    </location>
</feature>
<feature type="modified residue" description="4-hydroxyproline" evidence="34">
    <location>
        <position position="197"/>
    </location>
</feature>
<feature type="modified residue" description="4-hydroxyproline" evidence="34">
    <location>
        <position position="203"/>
    </location>
</feature>
<feature type="modified residue" description="4-hydroxyproline" evidence="34">
    <location>
        <position position="206"/>
    </location>
</feature>
<feature type="modified residue" description="4-hydroxyproline" evidence="34">
    <location>
        <position position="215"/>
    </location>
</feature>
<feature type="modified residue" description="4-hydroxyproline" evidence="34">
    <location>
        <position position="218"/>
    </location>
</feature>
<feature type="modified residue" description="4-hydroxyproline" evidence="34">
    <location>
        <position position="236"/>
    </location>
</feature>
<feature type="modified residue" description="4-hydroxyproline" evidence="34">
    <location>
        <position position="239"/>
    </location>
</feature>
<feature type="modified residue" description="4-hydroxyproline" evidence="34">
    <location>
        <position position="245"/>
    </location>
</feature>
<feature type="modified residue" description="4-hydroxyproline" evidence="34">
    <location>
        <position position="248"/>
    </location>
</feature>
<feature type="modified residue" description="4-hydroxyproline" evidence="34">
    <location>
        <position position="257"/>
    </location>
</feature>
<feature type="modified residue" description="4-hydroxyproline" evidence="34">
    <location>
        <position position="260"/>
    </location>
</feature>
<feature type="modified residue" description="5-hydroxylysine; alternate" evidence="34">
    <location>
        <position position="263"/>
    </location>
</feature>
<feature type="modified residue" description="4-hydroxyproline" evidence="34">
    <location>
        <position position="281"/>
    </location>
</feature>
<feature type="modified residue" description="5-hydroxylysine" evidence="34">
    <location>
        <position position="284"/>
    </location>
</feature>
<feature type="modified residue" description="4-hydroxyproline" evidence="34">
    <location>
        <position position="290"/>
    </location>
</feature>
<feature type="modified residue" description="4-hydroxyproline" evidence="34">
    <location>
        <position position="296"/>
    </location>
</feature>
<feature type="modified residue" description="4-hydroxyproline" evidence="34">
    <location>
        <position position="305"/>
    </location>
</feature>
<feature type="modified residue" description="4-hydroxyproline" evidence="34">
    <location>
        <position position="311"/>
    </location>
</feature>
<feature type="modified residue" description="4-hydroxyproline" evidence="34">
    <location>
        <position position="314"/>
    </location>
</feature>
<feature type="modified residue" description="4-hydroxyproline" evidence="34">
    <location>
        <position position="332"/>
    </location>
</feature>
<feature type="modified residue" description="4-hydroxyproline" evidence="34">
    <location>
        <position position="335"/>
    </location>
</feature>
<feature type="modified residue" description="4-hydroxyproline" evidence="34">
    <location>
        <position position="338"/>
    </location>
</feature>
<feature type="modified residue" description="4-hydroxyproline" evidence="34">
    <location>
        <position position="344"/>
    </location>
</feature>
<feature type="modified residue" description="4-hydroxyproline" evidence="34">
    <location>
        <position position="347"/>
    </location>
</feature>
<feature type="modified residue" description="4-hydroxyproline" evidence="34">
    <location>
        <position position="359"/>
    </location>
</feature>
<feature type="modified residue" description="4-hydroxyproline" evidence="34">
    <location>
        <position position="365"/>
    </location>
</feature>
<feature type="modified residue" description="4-hydroxyproline" evidence="34">
    <location>
        <position position="371"/>
    </location>
</feature>
<feature type="modified residue" description="4-hydroxyproline" evidence="34">
    <location>
        <position position="383"/>
    </location>
</feature>
<feature type="modified residue" description="4-hydroxyproline" evidence="34">
    <location>
        <position position="386"/>
    </location>
</feature>
<feature type="modified residue" description="4-hydroxyproline" evidence="34">
    <location>
        <position position="392"/>
    </location>
</feature>
<feature type="modified residue" description="4-hydroxyproline" evidence="36">
    <location>
        <position position="404"/>
    </location>
</feature>
<feature type="modified residue" description="4-hydroxyproline" evidence="36">
    <location>
        <position position="407"/>
    </location>
</feature>
<feature type="modified residue" description="4-hydroxyproline" evidence="36">
    <location>
        <position position="416"/>
    </location>
</feature>
<feature type="modified residue" description="4-hydroxyproline" evidence="36">
    <location>
        <position position="425"/>
    </location>
</feature>
<feature type="modified residue" description="4-hydroxyproline" evidence="36">
    <location>
        <position position="434"/>
    </location>
</feature>
<feature type="modified residue" description="4-hydroxyproline" evidence="36">
    <location>
        <position position="443"/>
    </location>
</feature>
<feature type="modified residue" description="4-hydroxyproline" evidence="36">
    <location>
        <position position="455"/>
    </location>
</feature>
<feature type="modified residue" description="4-hydroxyproline" evidence="36">
    <location>
        <position position="458"/>
    </location>
</feature>
<feature type="modified residue" description="4-hydroxyproline" evidence="36">
    <location>
        <position position="470"/>
    </location>
</feature>
<feature type="modified residue" description="4-hydroxyproline" evidence="36">
    <location>
        <position position="473"/>
    </location>
</feature>
<feature type="modified residue" description="4-hydroxyproline" evidence="36">
    <location>
        <position position="479"/>
    </location>
</feature>
<feature type="modified residue" description="4-hydroxyproline" evidence="36">
    <location>
        <position position="488"/>
    </location>
</feature>
<feature type="modified residue" description="4-hydroxyproline" evidence="36">
    <location>
        <position position="500"/>
    </location>
</feature>
<feature type="modified residue" description="4-hydroxyproline" evidence="36">
    <location>
        <position position="512"/>
    </location>
</feature>
<feature type="modified residue" description="4-hydroxyproline" evidence="36">
    <location>
        <position position="524"/>
    </location>
</feature>
<feature type="modified residue" description="4-hydroxyproline" evidence="36">
    <location>
        <position position="530"/>
    </location>
</feature>
<feature type="modified residue" description="4-hydroxyproline" evidence="36">
    <location>
        <position position="533"/>
    </location>
</feature>
<feature type="modified residue" description="4-hydroxyproline" evidence="36">
    <location>
        <position position="539"/>
    </location>
</feature>
<feature type="modified residue" description="4-hydroxyproline" evidence="36">
    <location>
        <position position="542"/>
    </location>
</feature>
<feature type="modified residue" description="4-hydroxyproline" evidence="36">
    <location>
        <position position="545"/>
    </location>
</feature>
<feature type="modified residue" description="4-hydroxyproline" evidence="36">
    <location>
        <position position="551"/>
    </location>
</feature>
<feature type="modified residue" description="4-hydroxyproline" evidence="36">
    <location>
        <position position="554"/>
    </location>
</feature>
<feature type="modified residue" description="4-hydroxyproline" evidence="36">
    <location>
        <position position="563"/>
    </location>
</feature>
<feature type="modified residue" description="4-hydroxyproline" evidence="36">
    <location>
        <position position="566"/>
    </location>
</feature>
<feature type="modified residue" description="4-hydroxyproline" evidence="36">
    <location>
        <position position="575"/>
    </location>
</feature>
<feature type="modified residue" description="4-hydroxyproline" evidence="36">
    <location>
        <position position="581"/>
    </location>
</feature>
<feature type="modified residue" description="4-hydroxyproline" evidence="36">
    <location>
        <position position="590"/>
    </location>
</feature>
<feature type="modified residue" description="4-hydroxyproline" evidence="36">
    <location>
        <position position="599"/>
    </location>
</feature>
<feature type="modified residue" description="4-hydroxyproline" evidence="36">
    <location>
        <position position="602"/>
    </location>
</feature>
<feature type="modified residue" description="4-hydroxyproline" evidence="36">
    <location>
        <position position="608"/>
    </location>
</feature>
<feature type="modified residue" description="4-hydroxyproline" evidence="36">
    <location>
        <position position="620"/>
    </location>
</feature>
<feature type="modified residue" description="4-hydroxyproline" evidence="36">
    <location>
        <position position="635"/>
    </location>
</feature>
<feature type="modified residue" description="4-hydroxyproline" evidence="36">
    <location>
        <position position="644"/>
    </location>
</feature>
<feature type="modified residue" description="4-hydroxyproline" evidence="36">
    <location>
        <position position="650"/>
    </location>
</feature>
<feature type="modified residue" description="4-hydroxyproline" evidence="36">
    <location>
        <position position="656"/>
    </location>
</feature>
<feature type="modified residue" description="4-hydroxyproline" evidence="36">
    <location>
        <position position="659"/>
    </location>
</feature>
<feature type="modified residue" description="4-hydroxyproline" evidence="36">
    <location>
        <position position="661"/>
    </location>
</feature>
<feature type="modified residue" description="4-hydroxyproline" evidence="36">
    <location>
        <position position="668"/>
    </location>
</feature>
<feature type="modified residue" description="4-hydroxyproline" evidence="36">
    <location>
        <position position="671"/>
    </location>
</feature>
<feature type="modified residue" description="4-hydroxyproline" evidence="36">
    <location>
        <position position="680"/>
    </location>
</feature>
<feature type="modified residue" description="4-hydroxyproline" evidence="36">
    <location>
        <position position="686"/>
    </location>
</feature>
<feature type="modified residue" description="4-hydroxyproline" evidence="36">
    <location>
        <position position="692"/>
    </location>
</feature>
<feature type="modified residue" description="4-hydroxyproline" evidence="36">
    <location>
        <position position="701"/>
    </location>
</feature>
<feature type="modified residue" description="4-hydroxyproline" evidence="36">
    <location>
        <position position="703"/>
    </location>
</feature>
<feature type="modified residue" description="4-hydroxyproline" evidence="36">
    <location>
        <position position="713"/>
    </location>
</feature>
<feature type="modified residue" description="4-hydroxyproline" evidence="36">
    <location>
        <position position="716"/>
    </location>
</feature>
<feature type="modified residue" description="4-hydroxyproline" evidence="36">
    <location>
        <position position="722"/>
    </location>
</feature>
<feature type="modified residue" description="4-hydroxyproline" evidence="35">
    <location>
        <position position="728"/>
    </location>
</feature>
<feature type="modified residue" description="4-hydroxyproline" evidence="35">
    <location>
        <position position="737"/>
    </location>
</feature>
<feature type="modified residue" description="4-hydroxyproline" evidence="35">
    <location>
        <position position="746"/>
    </location>
</feature>
<feature type="modified residue" description="4-hydroxyproline" evidence="35">
    <location>
        <position position="749"/>
    </location>
</feature>
<feature type="modified residue" description="4-hydroxyproline" evidence="35">
    <location>
        <position position="755"/>
    </location>
</feature>
<feature type="modified residue" description="4-hydroxyproline" evidence="35">
    <location>
        <position position="770"/>
    </location>
</feature>
<feature type="modified residue" description="4-hydroxyproline" evidence="35">
    <location>
        <position position="776"/>
    </location>
</feature>
<feature type="modified residue" description="4-hydroxyproline" evidence="35">
    <location>
        <position position="785"/>
    </location>
</feature>
<feature type="modified residue" description="4-hydroxyproline" evidence="35">
    <location>
        <position position="788"/>
    </location>
</feature>
<feature type="modified residue" description="4-hydroxyproline" evidence="35">
    <location>
        <position position="797"/>
    </location>
</feature>
<feature type="modified residue" description="4-hydroxyproline" evidence="35">
    <location>
        <position position="806"/>
    </location>
</feature>
<feature type="modified residue" description="4-hydroxyproline" evidence="35">
    <location>
        <position position="812"/>
    </location>
</feature>
<feature type="modified residue" description="4-hydroxyproline" evidence="35">
    <location>
        <position position="815"/>
    </location>
</feature>
<feature type="modified residue" description="4-hydroxyproline" evidence="35">
    <location>
        <position position="821"/>
    </location>
</feature>
<feature type="modified residue" description="4-hydroxyproline" evidence="35">
    <location>
        <position position="830"/>
    </location>
</feature>
<feature type="modified residue" description="4-hydroxyproline" evidence="35">
    <location>
        <position position="839"/>
    </location>
</feature>
<feature type="modified residue" description="4-hydroxyproline" evidence="35">
    <location>
        <position position="845"/>
    </location>
</feature>
<feature type="modified residue" description="4-hydroxyproline" evidence="35">
    <location>
        <position position="854"/>
    </location>
</feature>
<feature type="modified residue" description="5-hydroxylysine" evidence="35">
    <location>
        <position position="860"/>
    </location>
</feature>
<feature type="modified residue" description="4-hydroxyproline" evidence="35">
    <location>
        <position position="866"/>
    </location>
</feature>
<feature type="modified residue" description="4-hydroxyproline" evidence="35">
    <location>
        <position position="869"/>
    </location>
</feature>
<feature type="modified residue" description="4-hydroxyproline" evidence="35">
    <location>
        <position position="875"/>
    </location>
</feature>
<feature type="modified residue" description="4-hydroxyproline" evidence="35">
    <location>
        <position position="881"/>
    </location>
</feature>
<feature type="modified residue" description="4-hydroxyproline" evidence="35">
    <location>
        <position position="884"/>
    </location>
</feature>
<feature type="modified residue" description="4-hydroxyproline" evidence="35">
    <location>
        <position position="890"/>
    </location>
</feature>
<feature type="modified residue" description="4-hydroxyproline" evidence="35">
    <location>
        <position position="892"/>
    </location>
</feature>
<feature type="modified residue" description="4-hydroxyproline" evidence="35">
    <location>
        <position position="899"/>
    </location>
</feature>
<feature type="modified residue" description="4-hydroxyproline" evidence="35">
    <location>
        <position position="905"/>
    </location>
</feature>
<feature type="modified residue" description="4-hydroxyproline" evidence="35">
    <location>
        <position position="914"/>
    </location>
</feature>
<feature type="modified residue" description="4-hydroxyproline" evidence="35">
    <location>
        <position position="917"/>
    </location>
</feature>
<feature type="modified residue" description="4-hydroxyproline" evidence="35">
    <location>
        <position position="929"/>
    </location>
</feature>
<feature type="modified residue" description="4-hydroxyproline" evidence="35">
    <location>
        <position position="935"/>
    </location>
</feature>
<feature type="modified residue" description="4-hydroxyproline" evidence="35">
    <location>
        <position position="941"/>
    </location>
</feature>
<feature type="modified residue" description="4-hydroxyproline" evidence="35">
    <location>
        <position position="944"/>
    </location>
</feature>
<feature type="modified residue" description="4-hydroxyproline" evidence="35">
    <location>
        <position position="962"/>
    </location>
</feature>
<feature type="modified residue" description="4-hydroxyproline" evidence="37">
    <location>
        <position position="965"/>
    </location>
</feature>
<feature type="modified residue" description="4-hydroxyproline" evidence="37">
    <location>
        <position position="971"/>
    </location>
</feature>
<feature type="modified residue" description="5-hydroxylysine" evidence="37">
    <location>
        <position position="977"/>
    </location>
</feature>
<feature type="modified residue" description="4-hydroxyproline" evidence="37">
    <location>
        <position position="983"/>
    </location>
</feature>
<feature type="modified residue" description="4-hydroxyproline" evidence="37">
    <location>
        <position position="995"/>
    </location>
</feature>
<feature type="modified residue" description="4-hydroxyproline" evidence="37">
    <location>
        <position position="1001"/>
    </location>
</feature>
<feature type="modified residue" description="4-hydroxyproline" evidence="37">
    <location>
        <position position="1010"/>
    </location>
</feature>
<feature type="modified residue" description="4-hydroxyproline" evidence="37">
    <location>
        <position position="1016"/>
    </location>
</feature>
<feature type="modified residue" description="4-hydroxyproline" evidence="37">
    <location>
        <position position="1022"/>
    </location>
</feature>
<feature type="modified residue" description="4-hydroxyproline" evidence="37">
    <location>
        <position position="1028"/>
    </location>
</feature>
<feature type="modified residue" description="4-hydroxyproline" evidence="37">
    <location>
        <position position="1040"/>
    </location>
</feature>
<feature type="modified residue" description="4-hydroxyproline" evidence="37">
    <location>
        <position position="1043"/>
    </location>
</feature>
<feature type="modified residue" description="4-hydroxyproline" evidence="37">
    <location>
        <position position="1046"/>
    </location>
</feature>
<feature type="modified residue" description="4-hydroxyproline" evidence="37">
    <location>
        <position position="1049"/>
    </location>
</feature>
<feature type="modified residue" description="4-hydroxyproline" evidence="37">
    <location>
        <position position="1052"/>
    </location>
</feature>
<feature type="modified residue" description="4-hydroxyproline" evidence="37">
    <location>
        <position position="1076"/>
    </location>
</feature>
<feature type="modified residue" description="4-hydroxyproline" evidence="37">
    <location>
        <position position="1085"/>
    </location>
</feature>
<feature type="modified residue" description="5-hydroxylysine" evidence="37">
    <location>
        <position position="1106"/>
    </location>
</feature>
<feature type="modified residue" description="4-hydroxyproline" evidence="37">
    <location>
        <position position="1112"/>
    </location>
</feature>
<feature type="modified residue" description="4-hydroxyproline" evidence="37">
    <location>
        <position position="1115"/>
    </location>
</feature>
<feature type="modified residue" description="4-hydroxyproline" evidence="37">
    <location>
        <position position="1118"/>
    </location>
</feature>
<feature type="modified residue" description="4-hydroxyproline" evidence="37">
    <location>
        <position position="1121"/>
    </location>
</feature>
<feature type="modified residue" description="4-hydroxyproline" evidence="37">
    <location>
        <position position="1133"/>
    </location>
</feature>
<feature type="modified residue" description="4-hydroxyproline" evidence="37">
    <location>
        <position position="1148"/>
    </location>
</feature>
<feature type="modified residue" description="4-hydroxyproline" evidence="37">
    <location>
        <position position="1157"/>
    </location>
</feature>
<feature type="modified residue" description="4-hydroxyproline" evidence="37">
    <location>
        <position position="1163"/>
    </location>
</feature>
<feature type="modified residue" description="4-hydroxyproline" evidence="37">
    <location>
        <position position="1178"/>
    </location>
</feature>
<feature type="modified residue" description="4-hydroxyproline" evidence="37">
    <location>
        <position position="1181"/>
    </location>
</feature>
<feature type="modified residue" description="4-hydroxyproline" evidence="37">
    <location>
        <position position="1184"/>
    </location>
</feature>
<feature type="modified residue" description="4-hydroxyproline" evidence="37">
    <location>
        <position position="1187"/>
    </location>
</feature>
<feature type="modified residue" description="4-hydroxyproline" evidence="37">
    <location>
        <position position="1190"/>
    </location>
</feature>
<feature type="modified residue" description="4-hydroxyproline" evidence="37">
    <location>
        <position position="1193"/>
    </location>
</feature>
<feature type="glycosylation site" description="O-linked (Gal...) hydroxylysine; alternate">
    <location>
        <position position="263"/>
    </location>
</feature>
<feature type="disulfide bond" description="Interchain" evidence="2 24">
    <location>
        <position position="1196"/>
    </location>
</feature>
<feature type="disulfide bond" description="Interchain" evidence="2 24">
    <location>
        <position position="1197"/>
    </location>
</feature>
<feature type="disulfide bond" evidence="2 24">
    <location>
        <begin position="1262"/>
        <end position="1294"/>
    </location>
</feature>
<feature type="disulfide bond" description="Interchain (with C-1285)" evidence="2 24">
    <location>
        <position position="1268"/>
    </location>
</feature>
<feature type="disulfide bond" description="Interchain (with C-1268)" evidence="2 24">
    <location>
        <position position="1285"/>
    </location>
</feature>
<feature type="disulfide bond" evidence="2 24">
    <location>
        <begin position="1302"/>
        <end position="1464"/>
    </location>
</feature>
<feature type="disulfide bond" evidence="2 24">
    <location>
        <begin position="1372"/>
        <end position="1417"/>
    </location>
</feature>
<feature type="splice variant" id="VSP_022502" description="In isoform 2." evidence="57">
    <location>
        <begin position="847"/>
        <end position="1149"/>
    </location>
</feature>
<feature type="sequence variant" id="VAR_082043" description="In PMGEDSV; does not affect interaction with ADGRG1; dbSNP:rs1234344050." evidence="31 32">
    <original>P</original>
    <variation>A</variation>
    <location>
        <position position="49"/>
    </location>
</feature>
<feature type="sequence variant" id="VAR_001767" description="In dbSNP:rs111391222.">
    <original>L</original>
    <variation>F</variation>
    <location>
        <position position="169"/>
    </location>
</feature>
<feature type="sequence variant" id="VAR_001768" description="In EDSVASC; dbSNP:rs121912926." evidence="50 55">
    <original>G</original>
    <variation>C</variation>
    <location>
        <position position="183"/>
    </location>
</feature>
<feature type="sequence variant" id="VAR_011095" description="In EDSVASC; dbSNP:rs587779420." evidence="5">
    <original>G</original>
    <variation>D</variation>
    <location>
        <position position="183"/>
    </location>
</feature>
<feature type="sequence variant" id="VAR_011096" description="In EDSVASC; dbSNP:rs121912926." evidence="5">
    <original>G</original>
    <variation>S</variation>
    <location>
        <position position="183"/>
    </location>
</feature>
<feature type="sequence variant" id="VAR_011097" description="In EDSVASC; dbSNP:rs587779710." evidence="5">
    <original>G</original>
    <variation>V</variation>
    <location>
        <position position="192"/>
    </location>
</feature>
<feature type="sequence variant" id="VAR_001769" description="In EDSVASC; dbSNP:rs587779436." evidence="50 55">
    <original>G</original>
    <variation>R</variation>
    <location>
        <position position="201"/>
    </location>
</feature>
<feature type="sequence variant" id="VAR_011098" description="In EDSVASC; dbSNP:rs587779626." evidence="7">
    <original>G</original>
    <variation>D</variation>
    <location>
        <position position="204"/>
    </location>
</feature>
<feature type="sequence variant" id="VAR_011099" description="In EDSVASC; dbSNP:rs587779711.">
    <original>G</original>
    <variation>S</variation>
    <location>
        <position position="204"/>
    </location>
</feature>
<feature type="sequence variant" id="VAR_011100" description="In EDSVASC." evidence="7">
    <original>G</original>
    <variation>D</variation>
    <location>
        <position position="210"/>
    </location>
</feature>
<feature type="sequence variant" id="VAR_011101" description="In EDSVASC; dbSNP:rs587779624." evidence="5">
    <original>G</original>
    <variation>C</variation>
    <location>
        <position position="219"/>
    </location>
</feature>
<feature type="sequence variant" id="VAR_011102" description="In EDSVASC; dbSNP:rs587779533." evidence="5">
    <original>G</original>
    <variation>V</variation>
    <location>
        <position position="225"/>
    </location>
</feature>
<feature type="sequence variant" id="VAR_001770" description="In EDSVASC; dbSNP:rs587779555." evidence="50 55">
    <original>G</original>
    <variation>E</variation>
    <location>
        <position position="228"/>
    </location>
</feature>
<feature type="sequence variant" id="VAR_011103" description="In EDSVASC; dbSNP:rs587779468." evidence="5">
    <original>G</original>
    <variation>R</variation>
    <location>
        <position position="240"/>
    </location>
</feature>
<feature type="sequence variant" id="VAR_011104" description="In EDSVASC; dbSNP:rs587779629." evidence="5">
    <original>G</original>
    <variation>V</variation>
    <location>
        <position position="243"/>
    </location>
</feature>
<feature type="sequence variant" id="VAR_011105" description="In EDSVASC; dbSNP:rs121912927." evidence="5">
    <original>G</original>
    <variation>D</variation>
    <location>
        <position position="249"/>
    </location>
</feature>
<feature type="sequence variant" id="VAR_011106" description="In EDSVASC; dbSNP:rs121912927." evidence="5">
    <original>G</original>
    <variation>V</variation>
    <location>
        <position position="249"/>
    </location>
</feature>
<feature type="sequence variant" id="VAR_011107" description="In EDSVASC; dbSNP:rs587779464." evidence="5">
    <original>G</original>
    <variation>D</variation>
    <location>
        <position position="252"/>
    </location>
</feature>
<feature type="sequence variant" id="VAR_011108" description="In EDSVASC; dbSNP:rs587779705." evidence="5">
    <original>G</original>
    <variation>R</variation>
    <location>
        <position position="252"/>
    </location>
</feature>
<feature type="sequence variant" id="VAR_011109" description="In EDSVASC; dbSNP:rs587779464." evidence="5">
    <original>G</original>
    <variation>V</variation>
    <location>
        <position position="252"/>
    </location>
</feature>
<feature type="sequence variant" id="VAR_011110" description="In EDSVASC; dbSNP:rs587779605." evidence="5">
    <original>G</original>
    <variation>V</variation>
    <location>
        <position position="255"/>
    </location>
</feature>
<feature type="sequence variant" id="VAR_011111" description="In EDSVASC." evidence="7">
    <original>G</original>
    <variation>R</variation>
    <location>
        <position position="264"/>
    </location>
</feature>
<feature type="sequence variant" id="VAR_011112" description="In EDSVASC; dbSNP:rs587779427." evidence="5">
    <original>G</original>
    <variation>V</variation>
    <location>
        <position position="267"/>
    </location>
</feature>
<feature type="sequence variant" id="VAR_090040" description="In EDSVASC; likely benign; dbSNP:rs112185887." evidence="21">
    <original>R</original>
    <variation>Q</variation>
    <location>
        <position position="271"/>
    </location>
</feature>
<feature type="sequence variant" id="VAR_037007" description="In EDSVASC; dbSNP:rs1553507557." evidence="10">
    <original>G</original>
    <variation>R</variation>
    <location>
        <position position="297"/>
    </location>
</feature>
<feature type="sequence variant" id="VAR_001771" description="In EDSVASC; dbSNP:rs121912919." evidence="45">
    <original>G</original>
    <variation>R</variation>
    <location>
        <position position="303"/>
    </location>
</feature>
<feature type="sequence variant" id="VAR_011113" description="In EDSVASC; dbSNP:rs587779588." evidence="5">
    <original>G</original>
    <variation>V</variation>
    <location>
        <position position="321"/>
    </location>
</feature>
<feature type="sequence variant" id="VAR_011114" description="In EDSVASC." evidence="7">
    <original>G</original>
    <variation>D</variation>
    <location>
        <position position="327"/>
    </location>
</feature>
<feature type="sequence variant" id="VAR_011115" description="In EDSVASC; dbSNP:rs587779419." evidence="5">
    <original>G</original>
    <variation>R</variation>
    <location>
        <position position="345"/>
    </location>
</feature>
<feature type="sequence variant" id="VAR_011116" description="In EDSVASC; dbSNP:rs587779637." evidence="5">
    <original>G</original>
    <variation>R</variation>
    <location>
        <position position="417"/>
    </location>
</feature>
<feature type="sequence variant" id="VAR_035738" description="In EDSVASC; dbSNP:rs587779692." evidence="17 21">
    <original>G</original>
    <variation>S</variation>
    <location>
        <position position="420"/>
    </location>
</feature>
<feature type="sequence variant" id="VAR_082044" description="In PMGEDSV." evidence="32">
    <location>
        <begin position="428"/>
        <end position="1466"/>
    </location>
</feature>
<feature type="sequence variant" id="VAR_011117" description="In EDSVASC; dbSNP:rs587779489." evidence="5">
    <original>G</original>
    <variation>R</variation>
    <location>
        <position position="444"/>
    </location>
</feature>
<feature type="sequence variant" id="VAR_011118" description="In EDSVASC; dbSNP:rs587779476." evidence="5">
    <original>G</original>
    <variation>E</variation>
    <location>
        <position position="489"/>
    </location>
</feature>
<feature type="sequence variant" id="VAR_011119" description="In EDSVASC; dbSNP:rs587779523." evidence="5">
    <original>G</original>
    <variation>R</variation>
    <location>
        <position position="501"/>
    </location>
</feature>
<feature type="sequence variant" id="VAR_011120" description="In EDSVASC." evidence="5">
    <original>G</original>
    <variation>V</variation>
    <location>
        <position position="519"/>
    </location>
</feature>
<feature type="sequence variant" id="VAR_055665" description="In dbSNP:rs41263744.">
    <original>G</original>
    <variation>E</variation>
    <location>
        <position position="534"/>
    </location>
</feature>
<feature type="sequence variant" id="VAR_001772" description="In EDSVASC; dbSNP:rs587779584." evidence="50 55">
    <original>G</original>
    <variation>R</variation>
    <location>
        <position position="540"/>
    </location>
</feature>
<feature type="sequence variant" id="VAR_011121" description="In EDSVASC; dbSNP:rs587779679." evidence="5">
    <original>G</original>
    <variation>E</variation>
    <location>
        <position position="549"/>
    </location>
</feature>
<feature type="sequence variant" id="VAR_011122" description="In EDSVASC; dbSNP:rs121912928." evidence="5">
    <original>G</original>
    <variation>E</variation>
    <location>
        <position position="552"/>
    </location>
</feature>
<feature type="sequence variant" id="VAR_001773" description="In EDSVASC." evidence="48">
    <original>G</original>
    <variation>E</variation>
    <location>
        <position position="567"/>
    </location>
</feature>
<feature type="sequence variant" id="VAR_001774" description="In EDSVASC; dbSNP:rs121912923." evidence="49">
    <original>G</original>
    <variation>S</variation>
    <location>
        <position position="582"/>
    </location>
</feature>
<feature type="sequence variant" id="VAR_011123" description="In EDSVASC; dbSNP:rs587779691." evidence="5">
    <original>G</original>
    <variation>D</variation>
    <location>
        <position position="588"/>
    </location>
</feature>
<feature type="sequence variant" id="VAR_082045" description="In PMGEDSV." evidence="27">
    <location>
        <begin position="596"/>
        <end position="1466"/>
    </location>
</feature>
<feature type="sequence variant" id="VAR_001775" description="In dbSNP:rs35795890." evidence="43">
    <original>P</original>
    <variation>T</variation>
    <location>
        <position position="602"/>
    </location>
</feature>
<feature type="sequence variant" id="VAR_001776" description="In dbSNP:rs902780774." evidence="43">
    <original>P</original>
    <variation>L</variation>
    <location>
        <position position="635"/>
    </location>
</feature>
<feature type="sequence variant" id="VAR_011124" description="In EDSVASC; dbSNP:rs587779522." evidence="5">
    <original>G</original>
    <variation>R</variation>
    <location>
        <position position="636"/>
    </location>
</feature>
<feature type="sequence variant" id="VAR_011125" description="In EDSVASC; dbSNP:rs587779699." evidence="5">
    <original>G</original>
    <variation>E</variation>
    <location>
        <position position="657"/>
    </location>
</feature>
<feature type="sequence variant" id="VAR_011126" description="In EDSVASC; dbSNP:rs587779493." evidence="5">
    <original>G</original>
    <variation>D</variation>
    <location>
        <position position="660"/>
    </location>
</feature>
<feature type="sequence variant" id="VAR_001777" description="In EDSVASC; dbSNP:rs121912921." evidence="46">
    <original>G</original>
    <variation>D</variation>
    <location>
        <position position="666"/>
    </location>
</feature>
<feature type="sequence variant" id="VAR_011127" description="In dbSNP:rs1801183." evidence="45">
    <original>P</original>
    <variation>T</variation>
    <location>
        <position position="668"/>
    </location>
</feature>
<feature type="sequence variant" id="VAR_055666" description="In dbSNP:rs41263773." evidence="18">
    <original>A</original>
    <variation>T</variation>
    <location>
        <position position="679"/>
    </location>
</feature>
<feature type="sequence variant" id="VAR_055667" description="In dbSNP:rs41263775.">
    <original>P</original>
    <variation>A</variation>
    <location>
        <position position="686"/>
    </location>
</feature>
<feature type="sequence variant" id="VAR_001778" description="In dbSNP:rs1800255." evidence="18 22">
    <original>A</original>
    <variation>T</variation>
    <location>
        <position position="698"/>
    </location>
</feature>
<feature type="sequence variant" id="VAR_011128" description="In EDSVASC; dbSNP:rs587779668." evidence="5">
    <original>G</original>
    <variation>R</variation>
    <location>
        <position position="699"/>
    </location>
</feature>
<feature type="sequence variant" id="VAR_001779" description="In EDSVASC; dbSNP:rs587779638." evidence="52 53">
    <original>G</original>
    <variation>R</variation>
    <location>
        <position position="726"/>
    </location>
</feature>
<feature type="sequence variant" id="VAR_011129" description="In EDSVASC; dbSNP:rs121912925." evidence="4">
    <original>G</original>
    <variation>S</variation>
    <location>
        <position position="738"/>
    </location>
</feature>
<feature type="sequence variant" id="VAR_011130" description="In EDSVASC; dbSNP:rs587779615." evidence="5">
    <original>G</original>
    <variation>V</variation>
    <location>
        <position position="738"/>
    </location>
</feature>
<feature type="sequence variant" id="VAR_011131" description="In EDSVASC; dbSNP:rs587779697." evidence="5">
    <original>G</original>
    <variation>V</variation>
    <location>
        <position position="744"/>
    </location>
</feature>
<feature type="sequence variant" id="VAR_001780" description="In EDSVASC; dbSNP:rs1576468562." evidence="40">
    <original>G</original>
    <variation>E</variation>
    <location>
        <position position="756"/>
    </location>
</feature>
<feature type="sequence variant" id="VAR_001781" description="In EDSVASC." evidence="48">
    <original>G</original>
    <variation>C</variation>
    <location>
        <position position="762"/>
    </location>
</feature>
<feature type="sequence variant" id="VAR_001782" description="In EDSVASC; dbSNP:rs113485686." evidence="23">
    <original>G</original>
    <variation>R</variation>
    <location>
        <position position="786"/>
    </location>
</feature>
<feature type="sequence variant" id="VAR_001783" description="In EDSVASC; dbSNP:rs121912920." evidence="39">
    <original>G</original>
    <variation>S</variation>
    <location>
        <position position="804"/>
    </location>
</feature>
<feature type="sequence variant" id="VAR_001784" description="In EDSVASC." evidence="44">
    <original>G</original>
    <variation>R</variation>
    <location>
        <position position="828"/>
    </location>
</feature>
<feature type="sequence variant" id="VAR_011132" description="In EDSVASC; dbSNP:rs587779486." evidence="5">
    <original>G</original>
    <variation>W</variation>
    <location>
        <position position="828"/>
    </location>
</feature>
<feature type="sequence variant" id="VAR_037008" description="In EDSVASC." evidence="14">
    <location>
        <begin position="830"/>
        <end position="838"/>
    </location>
</feature>
<feature type="sequence variant" id="VAR_011133" description="In EDSVASC; dbSNP:rs587779690." evidence="5">
    <original>G</original>
    <variation>C</variation>
    <location>
        <position position="852"/>
    </location>
</feature>
<feature type="sequence variant" id="VAR_011134" description="In EDSVASC; dbSNP:rs587779645." evidence="5">
    <original>G</original>
    <variation>V</variation>
    <location>
        <position position="879"/>
    </location>
</feature>
<feature type="sequence variant" id="VAR_011135" description="In EDSVASC; dbSNP:rs587779622." evidence="5">
    <original>G</original>
    <variation>D</variation>
    <location>
        <position position="882"/>
    </location>
</feature>
<feature type="sequence variant" id="VAR_011136" description="In EDSVASC; dbSNP:rs587779599." evidence="5">
    <original>G</original>
    <variation>D</variation>
    <location>
        <position position="900"/>
    </location>
</feature>
<feature type="sequence variant" id="VAR_011137" description="In EDSVASC; dbSNP:rs587779505." evidence="5">
    <original>G</original>
    <variation>E</variation>
    <location>
        <position position="903"/>
    </location>
</feature>
<feature type="sequence variant" id="VAR_001785" description="In EDSVASC; dbSNP:rs587779483." evidence="47">
    <original>G</original>
    <variation>D</variation>
    <location>
        <position position="909"/>
    </location>
</feature>
<feature type="sequence variant" id="VAR_011138" description="In EDSVASC; dbSNP:rs587779483." evidence="5">
    <original>G</original>
    <variation>V</variation>
    <location>
        <position position="909"/>
    </location>
</feature>
<feature type="sequence variant" id="VAR_011139" description="In EDSVASC; dbSNP:rs587779662." evidence="5">
    <original>G</original>
    <variation>E</variation>
    <location>
        <position position="918"/>
    </location>
</feature>
<feature type="sequence variant" id="VAR_011140" description="In EDSVASC; dbSNP:rs587779471." evidence="5">
    <original>G</original>
    <variation>C</variation>
    <location>
        <position position="924"/>
    </location>
</feature>
<feature type="sequence variant" id="VAR_090041" description="In EDSVASC." evidence="21">
    <original>G</original>
    <variation>E</variation>
    <location>
        <position position="930"/>
    </location>
</feature>
<feature type="sequence variant" id="VAR_001786" description="In EDSVASC; dbSNP:rs587779566." evidence="50 55">
    <original>G</original>
    <variation>R</variation>
    <location>
        <position position="936"/>
    </location>
</feature>
<feature type="sequence variant" id="VAR_001787" description="In EDSVASC.">
    <original>G</original>
    <variation>S</variation>
    <location>
        <position position="936"/>
    </location>
</feature>
<feature type="sequence variant" id="VAR_001788" description="In EDSVASC; dbSNP:rs112978464." evidence="47">
    <original>G</original>
    <variation>D</variation>
    <location>
        <position position="939"/>
    </location>
</feature>
<feature type="sequence variant" id="VAR_011141" description="In EDSVASC; dbSNP:rs587779517." evidence="5">
    <original>G</original>
    <variation>E</variation>
    <location>
        <position position="942"/>
    </location>
</feature>
<feature type="sequence variant" id="VAR_001789" description="In EDSVASC; severe variant; dbSNP:rs121912913." evidence="26">
    <original>G</original>
    <variation>S</variation>
    <location>
        <position position="957"/>
    </location>
</feature>
<feature type="sequence variant" id="VAR_001790" description="In EDSVASC; severe variant; dbSNP:rs121912922." evidence="38">
    <original>G</original>
    <variation>V</variation>
    <location>
        <position position="960"/>
    </location>
</feature>
<feature type="sequence variant" id="VAR_011142" description="In EDSVASC; dbSNP:rs587779571." evidence="5">
    <original>G</original>
    <variation>V</variation>
    <location>
        <position position="966"/>
    </location>
</feature>
<feature type="sequence variant" id="VAR_011143" description="In EDSVASC; dbSNP:rs587779559." evidence="5">
    <original>G</original>
    <variation>A</variation>
    <location>
        <position position="972"/>
    </location>
</feature>
<feature type="sequence variant" id="VAR_011144" description="In EDSVASC; requires 2 nucleotide substitutions; dbSNP:rs1559061242." evidence="5">
    <original>G</original>
    <variation>T</variation>
    <location>
        <position position="984"/>
    </location>
</feature>
<feature type="sequence variant" id="VAR_001791" description="In EDSVASC; dbSNP:rs587779576." evidence="55">
    <original>G</original>
    <variation>E</variation>
    <location>
        <position position="996"/>
    </location>
</feature>
<feature type="sequence variant" id="VAR_011145" description="In EDSVASC; dbSNP:rs587779548." evidence="5">
    <original>G</original>
    <variation>R</variation>
    <location>
        <position position="999"/>
    </location>
</feature>
<feature type="sequence variant" id="VAR_011146" description="In EDSVASC; dbSNP:rs587779552." evidence="5">
    <original>G</original>
    <variation>E</variation>
    <location>
        <position position="1011"/>
    </location>
</feature>
<feature type="sequence variant" id="VAR_001792" description="In EDSVASC; dbSNP:rs121912916." evidence="12">
    <original>G</original>
    <variation>E</variation>
    <location>
        <position position="1014"/>
    </location>
</feature>
<feature type="sequence variant" id="VAR_011147" description="In EDSVASC; dbSNP:rs587779428." evidence="5">
    <original>G</original>
    <variation>V</variation>
    <location>
        <position position="1032"/>
    </location>
</feature>
<feature type="sequence variant" id="VAR_011148" description="In EDSVASC; dbSNP:rs587779704." evidence="5">
    <original>G</original>
    <variation>C</variation>
    <location>
        <position position="1035"/>
    </location>
</feature>
<feature type="sequence variant" id="VAR_011149" description="In EDSVASC." evidence="8">
    <original>G</original>
    <variation>D</variation>
    <location>
        <position position="1044"/>
    </location>
</feature>
<feature type="sequence variant" id="VAR_001793" description="In EDSVASC; mild variant; dbSNP:rs121912914." evidence="30">
    <original>G</original>
    <variation>D</variation>
    <location>
        <position position="1050"/>
    </location>
</feature>
<feature type="sequence variant" id="VAR_011150" description="In EDSVASC; dbSNP:rs121912914." evidence="11">
    <original>G</original>
    <variation>V</variation>
    <location>
        <position position="1050"/>
    </location>
</feature>
<feature type="sequence variant" id="VAR_001794" description="In EDSVASC; dbSNP:rs587779709." evidence="55">
    <original>G</original>
    <variation>V</variation>
    <location>
        <position position="1071"/>
    </location>
</feature>
<feature type="sequence variant" id="VAR_001795" description="In EDSVASC; dbSNP:rs121912915." evidence="19">
    <original>G</original>
    <variation>V</variation>
    <location>
        <position position="1077"/>
    </location>
</feature>
<feature type="sequence variant" id="VAR_011151" description="In EDSVASC; dbSNP:rs587779672." evidence="5">
    <original>G</original>
    <variation>D</variation>
    <location>
        <position position="1089"/>
    </location>
</feature>
<feature type="sequence variant" id="VAR_011152" description="In EDSVASC." evidence="7">
    <original>G</original>
    <variation>D</variation>
    <location>
        <position position="1098"/>
    </location>
</feature>
<feature type="sequence variant" id="VAR_011153" description="In EDSVASC; dbSNP:rs587779614." evidence="5">
    <original>G</original>
    <variation>V</variation>
    <location>
        <position position="1098"/>
    </location>
</feature>
<feature type="sequence variant" id="VAR_001796" description="In EDSVASC; dbSNP:rs121912924." evidence="51">
    <original>G</original>
    <variation>E</variation>
    <location>
        <position position="1101"/>
    </location>
</feature>
<feature type="sequence variant" id="VAR_001797" description="In EDSVASC." evidence="55">
    <original>G</original>
    <variation>A</variation>
    <location>
        <position position="1104"/>
    </location>
</feature>
<feature type="sequence variant" id="VAR_011154" description="In EDSVASC; dbSNP:rs587779473." evidence="5">
    <original>G</original>
    <variation>V</variation>
    <location>
        <position position="1161"/>
    </location>
</feature>
<feature type="sequence variant" id="VAR_011155" description="In EDSVASC; dbSNP:rs587779431." evidence="5">
    <original>G</original>
    <variation>E</variation>
    <location>
        <position position="1164"/>
    </location>
</feature>
<feature type="sequence variant" id="VAR_011156" description="In EDSVASC; dbSNP:rs587779553." evidence="5">
    <original>G</original>
    <variation>R</variation>
    <location>
        <position position="1164"/>
    </location>
</feature>
<feature type="sequence variant" id="VAR_001798" description="In spondyloepiphyseal dysplasia.">
    <original>G</original>
    <variation>S</variation>
    <location>
        <position position="1164"/>
    </location>
</feature>
<feature type="sequence variant" id="VAR_001799" description="In EDSVASC; dbSNP:rs587779578." evidence="54">
    <original>G</original>
    <variation>V</variation>
    <location>
        <position position="1167"/>
    </location>
</feature>
<feature type="sequence variant" id="VAR_001800" description="In EDSVASC; dbSNP:rs587779465." evidence="48 54">
    <original>G</original>
    <variation>D</variation>
    <location>
        <position position="1170"/>
    </location>
</feature>
<feature type="sequence variant" id="VAR_011157" description="In EDSVASC; dbSNP:rs587779465." evidence="5">
    <original>G</original>
    <variation>V</variation>
    <location>
        <position position="1170"/>
    </location>
</feature>
<feature type="sequence variant" id="VAR_001801" description="In EDSVASC; dbSNP:rs121912918." evidence="7 13 54">
    <original>G</original>
    <variation>E</variation>
    <location>
        <position position="1173"/>
    </location>
</feature>
<feature type="sequence variant" id="VAR_011158" description="In EDSVASC; Gottron type acrogeria; dbSNP:rs587779521." evidence="6">
    <original>G</original>
    <variation>R</variation>
    <location>
        <position position="1173"/>
    </location>
</feature>
<feature type="sequence variant" id="VAR_001802" description="In EDSVASC; severe; dbSNP:rs1553509726." evidence="41">
    <original>G</original>
    <variation>V</variation>
    <location>
        <position position="1176"/>
    </location>
</feature>
<feature type="sequence variant" id="VAR_011159" description="In EDSVASC; dbSNP:rs587779574." evidence="50">
    <original>G</original>
    <variation>R</variation>
    <location>
        <position position="1179"/>
    </location>
</feature>
<feature type="sequence variant" id="VAR_001803" description="In EDSVASC; dbSNP:rs111505097." evidence="55">
    <original>G</original>
    <variation>E</variation>
    <location>
        <position position="1182"/>
    </location>
</feature>
<feature type="sequence variant" id="VAR_001804" description="In EDSVASC; severe variant; dbSNP:rs121912917." evidence="15">
    <original>G</original>
    <variation>D</variation>
    <location>
        <position position="1185"/>
    </location>
</feature>
<feature type="sequence variant" id="VAR_001805" description="In EDSVASC; dbSNP:rs121912917." evidence="55">
    <original>G</original>
    <variation>V</variation>
    <location>
        <position position="1185"/>
    </location>
</feature>
<feature type="sequence variant" id="VAR_001806" description="In EDSVASC; severe variant; dbSNP:rs112456072." evidence="42 55">
    <original>G</original>
    <variation>E</variation>
    <location>
        <position position="1188"/>
    </location>
</feature>
<feature type="sequence variant" id="VAR_001807" description="In EDSVASC; dbSNP:rs587779504." evidence="55">
    <original>G</original>
    <variation>R</variation>
    <location>
        <position position="1188"/>
    </location>
</feature>
<feature type="sequence variant" id="VAR_020012" description="In dbSNP:rs2271683." evidence="18">
    <original>I</original>
    <variation>V</variation>
    <location>
        <position position="1205"/>
    </location>
</feature>
<feature type="sequence variant" id="VAR_082046" description="In PMGEDSV; dbSNP:rs587779528." evidence="27">
    <original>G</original>
    <variation>E</variation>
    <location>
        <position position="1284"/>
    </location>
</feature>
<feature type="sequence variant" id="VAR_090042" description="In EDSVASC; uncertain significance; dbSNP:rs111840783." evidence="21">
    <original>K</original>
    <variation>R</variation>
    <location>
        <position position="1313"/>
    </location>
</feature>
<feature type="sequence variant" id="VAR_030115" description="In dbSNP:rs1516446." evidence="9 16 18 28 29 33 56">
    <original>H</original>
    <variation>Q</variation>
    <location>
        <position position="1353"/>
    </location>
</feature>
<feature type="sequence variant" id="VAR_035739" description="In a colorectal cancer sample; somatic mutation; dbSNP:rs747324731." evidence="17">
    <original>R</original>
    <variation>C</variation>
    <location>
        <position position="1434"/>
    </location>
</feature>
<feature type="sequence conflict" description="In Ref. 10; CAA33387." evidence="58" ref="10">
    <original>G</original>
    <variation>GG</variation>
    <location>
        <position position="163"/>
    </location>
</feature>
<feature type="sequence conflict" description="In Ref. 11; AA sequence." evidence="58" ref="11">
    <original>G</original>
    <variation>V</variation>
    <location>
        <position position="168"/>
    </location>
</feature>
<feature type="sequence conflict" description="In Ref. 11; AA sequence." evidence="58" ref="11">
    <location>
        <begin position="226"/>
        <end position="228"/>
    </location>
</feature>
<feature type="sequence conflict" description="In Ref. 10; CAA33387." evidence="58" ref="10">
    <original>E</original>
    <variation>D</variation>
    <location>
        <position position="241"/>
    </location>
</feature>
<feature type="sequence conflict" description="In Ref. 11; AA sequence." evidence="58" ref="11">
    <original>T</original>
    <variation>A</variation>
    <location>
        <position position="278"/>
    </location>
</feature>
<feature type="sequence conflict" description="In Ref. 11; AA sequence." evidence="58" ref="11">
    <original>NGA</original>
    <variation>DGS</variation>
    <location>
        <begin position="293"/>
        <end position="295"/>
    </location>
</feature>
<feature type="sequence conflict" description="In Ref. 15; AA sequence." evidence="58" ref="15">
    <original>A</original>
    <variation>L</variation>
    <location>
        <position position="401"/>
    </location>
</feature>
<feature type="sequence conflict" description="In Ref. 15; AA sequence." evidence="58" ref="15">
    <original>L</original>
    <variation>P</variation>
    <location>
        <position position="409"/>
    </location>
</feature>
<feature type="sequence conflict" description="In Ref. 10; CAA33387." evidence="58" ref="10">
    <original>E</original>
    <variation>D</variation>
    <location>
        <position position="472"/>
    </location>
</feature>
<feature type="sequence conflict" description="In Ref. 10; CAA33387." evidence="58" ref="10">
    <original>PGF</original>
    <variation>LGS</variation>
    <location>
        <begin position="488"/>
        <end position="490"/>
    </location>
</feature>
<feature type="sequence conflict" description="In Ref. 15; AA sequence." evidence="58" ref="15">
    <original>A</original>
    <variation>E</variation>
    <location>
        <position position="589"/>
    </location>
</feature>
<feature type="sequence conflict" description="In Ref. 10; CAA33387." evidence="58" ref="10">
    <original>T</original>
    <variation>Y</variation>
    <location>
        <position position="614"/>
    </location>
</feature>
<feature type="sequence conflict" description="In Ref. 10; CAA33387." evidence="58" ref="10">
    <original>P</original>
    <variation>R</variation>
    <location>
        <position position="635"/>
    </location>
</feature>
<feature type="sequence conflict" description="In Ref. 10; CAA33387." evidence="58" ref="10">
    <original>D</original>
    <variation>E</variation>
    <location>
        <position position="664"/>
    </location>
</feature>
<feature type="sequence conflict" description="In Ref. 16; AA sequence." evidence="58" ref="16">
    <original>D</original>
    <variation>N</variation>
    <location>
        <position position="676"/>
    </location>
</feature>
<feature type="sequence conflict" description="In Ref. 15; AA sequence." evidence="58" ref="15">
    <original>T</original>
    <variation>P</variation>
    <location>
        <position position="803"/>
    </location>
</feature>
<feature type="sequence conflict" description="In Ref. 18; AA sequence." evidence="58" ref="18">
    <original>S</original>
    <variation>A</variation>
    <location>
        <position position="896"/>
    </location>
</feature>
<feature type="sequence conflict" description="In Ref. 22; AA sequence." evidence="58" ref="22">
    <original>S</original>
    <variation>A</variation>
    <location>
        <position position="980"/>
    </location>
</feature>
<feature type="sequence conflict" description="In Ref. 22; AA sequence." evidence="58" ref="22">
    <original>ANGLS</original>
    <variation>PSGQN</variation>
    <location>
        <begin position="985"/>
        <end position="989"/>
    </location>
</feature>
<feature type="sequence conflict" description="In Ref. 20; CAA29886." evidence="58" ref="20">
    <original>D</original>
    <variation>Y</variation>
    <location>
        <position position="1019"/>
    </location>
</feature>
<feature type="sequence conflict" description="In Ref. 15; AA sequence." evidence="58" ref="15">
    <original>S</original>
    <variation>P</variation>
    <location>
        <position position="1067"/>
    </location>
</feature>
<feature type="sequence conflict" description="In Ref. 15; AA sequence." evidence="58" ref="15">
    <original>A</original>
    <variation>P</variation>
    <location>
        <position position="1070"/>
    </location>
</feature>
<feature type="sequence conflict" description="In Ref. 22; AA sequence." evidence="58" ref="22">
    <original>T</original>
    <variation>P</variation>
    <location>
        <position position="1097"/>
    </location>
</feature>
<feature type="sequence conflict" description="In Ref. 22; AA sequence." evidence="58" ref="22">
    <original>TS</original>
    <variation>AT</variation>
    <location>
        <begin position="1153"/>
        <end position="1154"/>
    </location>
</feature>
<feature type="sequence conflict" description="In Ref. 22; AA sequence." evidence="58" ref="22">
    <original>H</original>
    <variation>S</variation>
    <location>
        <position position="1156"/>
    </location>
</feature>
<feature type="sequence conflict" description="In Ref. 10; CAA33387." evidence="58" ref="10">
    <original>P</original>
    <variation>S</variation>
    <location>
        <position position="1184"/>
    </location>
</feature>
<feature type="sequence conflict" description="In Ref. 10; CAA33387." evidence="58" ref="10">
    <original>A</original>
    <variation>P</variation>
    <location>
        <position position="1203"/>
    </location>
</feature>
<feature type="sequence conflict" description="In Ref. 10; CAA33387." evidence="58" ref="10">
    <original>G</original>
    <variation>A</variation>
    <location>
        <position position="1210"/>
    </location>
</feature>
<feature type="sequence conflict" description="In Ref. 26; AAA52002." evidence="58" ref="26">
    <original>D</original>
    <variation>P</variation>
    <location>
        <position position="1222"/>
    </location>
</feature>
<feature type="sequence conflict" description="In Ref. 26; AAA52002." evidence="58" ref="26">
    <original>M</original>
    <variation>I</variation>
    <location>
        <position position="1235"/>
    </location>
</feature>
<feature type="sequence conflict" description="In Ref. 20; CAA29886 and 23; CAA25879." evidence="58" ref="20 23">
    <original>V</original>
    <variation>A</variation>
    <location>
        <position position="1241"/>
    </location>
</feature>
<feature type="sequence conflict" description="In Ref. 26; AAA52002." evidence="58" ref="26">
    <original>S</original>
    <variation>T</variation>
    <location>
        <position position="1274"/>
    </location>
</feature>
<feature type="sequence conflict" description="In Ref. 26; AAA52002." evidence="58" ref="26">
    <original>M</original>
    <variation>I</variation>
    <location>
        <position position="1332"/>
    </location>
</feature>
<feature type="sequence conflict" description="In Ref. 26; AAA52002." evidence="58" ref="26">
    <original>L</original>
    <variation>P</variation>
    <location>
        <position position="1357"/>
    </location>
</feature>
<feature type="helix" evidence="62">
    <location>
        <begin position="1231"/>
        <end position="1249"/>
    </location>
</feature>
<feature type="strand" evidence="59">
    <location>
        <begin position="1253"/>
        <end position="1257"/>
    </location>
</feature>
<feature type="strand" evidence="62">
    <location>
        <begin position="1259"/>
        <end position="1261"/>
    </location>
</feature>
<feature type="helix" evidence="59">
    <location>
        <begin position="1262"/>
        <end position="1268"/>
    </location>
</feature>
<feature type="strand" evidence="59">
    <location>
        <begin position="1274"/>
        <end position="1279"/>
    </location>
</feature>
<feature type="helix" evidence="59">
    <location>
        <begin position="1286"/>
        <end position="1288"/>
    </location>
</feature>
<feature type="strand" evidence="59">
    <location>
        <begin position="1290"/>
        <end position="1295"/>
    </location>
</feature>
<feature type="turn" evidence="59">
    <location>
        <begin position="1296"/>
        <end position="1299"/>
    </location>
</feature>
<feature type="strand" evidence="59">
    <location>
        <begin position="1300"/>
        <end position="1303"/>
    </location>
</feature>
<feature type="strand" evidence="59">
    <location>
        <begin position="1305"/>
        <end position="1307"/>
    </location>
</feature>
<feature type="strand" evidence="59">
    <location>
        <begin position="1309"/>
        <end position="1313"/>
    </location>
</feature>
<feature type="strand" evidence="61">
    <location>
        <begin position="1320"/>
        <end position="1322"/>
    </location>
</feature>
<feature type="helix" evidence="59">
    <location>
        <begin position="1328"/>
        <end position="1331"/>
    </location>
</feature>
<feature type="strand" evidence="60">
    <location>
        <begin position="1339"/>
        <end position="1341"/>
    </location>
</feature>
<feature type="strand" evidence="61">
    <location>
        <begin position="1343"/>
        <end position="1345"/>
    </location>
</feature>
<feature type="helix" evidence="59">
    <location>
        <begin position="1347"/>
        <end position="1360"/>
    </location>
</feature>
<feature type="strand" evidence="59">
    <location>
        <begin position="1364"/>
        <end position="1374"/>
    </location>
</feature>
<feature type="turn" evidence="59">
    <location>
        <begin position="1381"/>
        <end position="1384"/>
    </location>
</feature>
<feature type="strand" evidence="59">
    <location>
        <begin position="1391"/>
        <end position="1393"/>
    </location>
</feature>
<feature type="strand" evidence="59">
    <location>
        <begin position="1395"/>
        <end position="1397"/>
    </location>
</feature>
<feature type="strand" evidence="59">
    <location>
        <begin position="1399"/>
        <end position="1404"/>
    </location>
</feature>
<feature type="helix" evidence="62">
    <location>
        <begin position="1406"/>
        <end position="1408"/>
    </location>
</feature>
<feature type="strand" evidence="59">
    <location>
        <begin position="1411"/>
        <end position="1415"/>
    </location>
</feature>
<feature type="strand" evidence="59">
    <location>
        <begin position="1422"/>
        <end position="1434"/>
    </location>
</feature>
<feature type="helix" evidence="59">
    <location>
        <begin position="1436"/>
        <end position="1438"/>
    </location>
</feature>
<feature type="strand" evidence="59">
    <location>
        <begin position="1443"/>
        <end position="1445"/>
    </location>
</feature>
<feature type="strand" evidence="62">
    <location>
        <begin position="1451"/>
        <end position="1453"/>
    </location>
</feature>
<feature type="strand" evidence="59">
    <location>
        <begin position="1455"/>
        <end position="1465"/>
    </location>
</feature>
<organism>
    <name type="scientific">Homo sapiens</name>
    <name type="common">Human</name>
    <dbReference type="NCBI Taxonomy" id="9606"/>
    <lineage>
        <taxon>Eukaryota</taxon>
        <taxon>Metazoa</taxon>
        <taxon>Chordata</taxon>
        <taxon>Craniata</taxon>
        <taxon>Vertebrata</taxon>
        <taxon>Euteleostomi</taxon>
        <taxon>Mammalia</taxon>
        <taxon>Eutheria</taxon>
        <taxon>Euarchontoglires</taxon>
        <taxon>Primates</taxon>
        <taxon>Haplorrhini</taxon>
        <taxon>Catarrhini</taxon>
        <taxon>Hominidae</taxon>
        <taxon>Homo</taxon>
    </lineage>
</organism>
<dbReference type="EMBL" id="X14420">
    <property type="protein sequence ID" value="CAA32583.1"/>
    <property type="molecule type" value="mRNA"/>
</dbReference>
<dbReference type="EMBL" id="AY054301">
    <property type="protein sequence ID" value="AAL13167.1"/>
    <property type="molecule type" value="Genomic_DNA"/>
</dbReference>
<dbReference type="EMBL" id="AY016295">
    <property type="protein sequence ID" value="AAL13167.1"/>
    <property type="status" value="JOINED"/>
    <property type="molecule type" value="Genomic_DNA"/>
</dbReference>
<dbReference type="EMBL" id="KC567894">
    <property type="protein sequence ID" value="AGL34959.1"/>
    <property type="molecule type" value="Genomic_DNA"/>
</dbReference>
<dbReference type="EMBL" id="GU143397">
    <property type="protein sequence ID" value="ACZ58371.1"/>
    <property type="molecule type" value="Genomic_DNA"/>
</dbReference>
<dbReference type="EMBL" id="AC066694">
    <property type="protein sequence ID" value="AAY24164.1"/>
    <property type="molecule type" value="Genomic_DNA"/>
</dbReference>
<dbReference type="EMBL" id="CH471058">
    <property type="protein sequence ID" value="EAX10910.1"/>
    <property type="molecule type" value="Genomic_DNA"/>
</dbReference>
<dbReference type="EMBL" id="CH471058">
    <property type="protein sequence ID" value="EAX10911.1"/>
    <property type="molecule type" value="Genomic_DNA"/>
</dbReference>
<dbReference type="EMBL" id="BC028178">
    <property type="protein sequence ID" value="AAH28178.1"/>
    <property type="molecule type" value="mRNA"/>
</dbReference>
<dbReference type="EMBL" id="M26939">
    <property type="protein sequence ID" value="AAA52040.1"/>
    <property type="molecule type" value="Genomic_DNA"/>
</dbReference>
<dbReference type="EMBL" id="X07240">
    <property type="protein sequence ID" value="CAA30229.1"/>
    <property type="molecule type" value="mRNA"/>
</dbReference>
<dbReference type="EMBL" id="X15332">
    <property type="protein sequence ID" value="CAA33387.1"/>
    <property type="molecule type" value="mRNA"/>
</dbReference>
<dbReference type="EMBL" id="S62925">
    <property type="protein sequence ID" value="AAD13937.1"/>
    <property type="molecule type" value="Genomic_DNA"/>
</dbReference>
<dbReference type="EMBL" id="S79877">
    <property type="protein sequence ID" value="AAB35615.1"/>
    <property type="molecule type" value="mRNA"/>
</dbReference>
<dbReference type="EMBL" id="M59312">
    <property type="protein sequence ID" value="AAA52041.1"/>
    <property type="molecule type" value="Genomic_DNA"/>
</dbReference>
<dbReference type="EMBL" id="M59227">
    <property type="protein sequence ID" value="AAB59383.1"/>
    <property type="molecule type" value="mRNA"/>
</dbReference>
<dbReference type="EMBL" id="M55603">
    <property type="status" value="NOT_ANNOTATED_CDS"/>
    <property type="molecule type" value="Genomic_DNA"/>
</dbReference>
<dbReference type="EMBL" id="X06700">
    <property type="protein sequence ID" value="CAA29886.1"/>
    <property type="molecule type" value="mRNA"/>
</dbReference>
<dbReference type="EMBL" id="X01655">
    <property type="protein sequence ID" value="CAA25821.1"/>
    <property type="molecule type" value="mRNA"/>
</dbReference>
<dbReference type="EMBL" id="X01742">
    <property type="protein sequence ID" value="CAA25879.1"/>
    <property type="molecule type" value="mRNA"/>
</dbReference>
<dbReference type="EMBL" id="M13146">
    <property type="protein sequence ID" value="AAA52003.1"/>
    <property type="molecule type" value="mRNA"/>
</dbReference>
<dbReference type="EMBL" id="M11134">
    <property type="protein sequence ID" value="AAA52004.1"/>
    <property type="molecule type" value="mRNA"/>
</dbReference>
<dbReference type="EMBL" id="M10795">
    <property type="protein sequence ID" value="AAA52002.1"/>
    <property type="molecule type" value="Genomic_DNA"/>
</dbReference>
<dbReference type="EMBL" id="M10615">
    <property type="protein sequence ID" value="AAA52002.1"/>
    <property type="status" value="JOINED"/>
    <property type="molecule type" value="Genomic_DNA"/>
</dbReference>
<dbReference type="EMBL" id="M10793">
    <property type="protein sequence ID" value="AAA52002.1"/>
    <property type="status" value="JOINED"/>
    <property type="molecule type" value="Genomic_DNA"/>
</dbReference>
<dbReference type="EMBL" id="M10794">
    <property type="protein sequence ID" value="AAA52002.1"/>
    <property type="status" value="JOINED"/>
    <property type="molecule type" value="Genomic_DNA"/>
</dbReference>
<dbReference type="EMBL" id="M10800">
    <property type="protein sequence ID" value="AAA52002.1"/>
    <property type="status" value="JOINED"/>
    <property type="molecule type" value="Genomic_DNA"/>
</dbReference>
<dbReference type="EMBL" id="M10801">
    <property type="protein sequence ID" value="AAA52002.1"/>
    <property type="status" value="JOINED"/>
    <property type="molecule type" value="Genomic_DNA"/>
</dbReference>
<dbReference type="CCDS" id="CCDS2297.1">
    <molecule id="P02461-1"/>
</dbReference>
<dbReference type="PIR" id="S05272">
    <property type="entry name" value="CGHU7L"/>
</dbReference>
<dbReference type="RefSeq" id="NP_000081.2">
    <molecule id="P02461-1"/>
    <property type="nucleotide sequence ID" value="NM_000090.4"/>
</dbReference>
<dbReference type="PDB" id="2V53">
    <property type="method" value="X-ray"/>
    <property type="resolution" value="3.20 A"/>
    <property type="chains" value="B/C/D=563-584"/>
</dbReference>
<dbReference type="PDB" id="3DMW">
    <property type="method" value="X-ray"/>
    <property type="resolution" value="2.30 A"/>
    <property type="chains" value="A/B/C=1158-1199"/>
</dbReference>
<dbReference type="PDB" id="4AE2">
    <property type="method" value="X-ray"/>
    <property type="resolution" value="1.68 A"/>
    <property type="chains" value="A/B/C=1222-1466"/>
</dbReference>
<dbReference type="PDB" id="4AEJ">
    <property type="method" value="X-ray"/>
    <property type="resolution" value="2.21 A"/>
    <property type="chains" value="A/B/C=1222-1466"/>
</dbReference>
<dbReference type="PDB" id="4AK3">
    <property type="method" value="X-ray"/>
    <property type="resolution" value="3.50 A"/>
    <property type="chains" value="A=1222-1466"/>
</dbReference>
<dbReference type="PDB" id="4GYX">
    <property type="method" value="X-ray"/>
    <property type="resolution" value="1.49 A"/>
    <property type="chains" value="A/B/C=1158-1200"/>
</dbReference>
<dbReference type="PDB" id="6FZV">
    <property type="method" value="X-ray"/>
    <property type="resolution" value="2.70 A"/>
    <property type="chains" value="A/B/C=1222-1466"/>
</dbReference>
<dbReference type="PDB" id="6FZW">
    <property type="method" value="X-ray"/>
    <property type="resolution" value="2.78 A"/>
    <property type="chains" value="A/B/C=1185-1466"/>
</dbReference>
<dbReference type="PDB" id="7WWR">
    <property type="method" value="X-ray"/>
    <property type="resolution" value="1.30 A"/>
    <property type="chains" value="A/B/C=973-1002"/>
</dbReference>
<dbReference type="PDB" id="7WWS">
    <property type="method" value="X-ray"/>
    <property type="resolution" value="1.30 A"/>
    <property type="chains" value="A/B/C=976-1002"/>
</dbReference>
<dbReference type="PDB" id="7XAN">
    <property type="method" value="X-ray"/>
    <property type="resolution" value="1.50 A"/>
    <property type="chains" value="A/B/C=922-948"/>
</dbReference>
<dbReference type="PDBsum" id="2V53"/>
<dbReference type="PDBsum" id="3DMW"/>
<dbReference type="PDBsum" id="4AE2"/>
<dbReference type="PDBsum" id="4AEJ"/>
<dbReference type="PDBsum" id="4AK3"/>
<dbReference type="PDBsum" id="4GYX"/>
<dbReference type="PDBsum" id="6FZV"/>
<dbReference type="PDBsum" id="6FZW"/>
<dbReference type="PDBsum" id="7WWR"/>
<dbReference type="PDBsum" id="7WWS"/>
<dbReference type="PDBsum" id="7XAN"/>
<dbReference type="SMR" id="P02461"/>
<dbReference type="BioGRID" id="107678">
    <property type="interactions" value="24"/>
</dbReference>
<dbReference type="ComplexPortal" id="CPX-1714">
    <property type="entry name" value="Collagen type III trimer"/>
</dbReference>
<dbReference type="CORUM" id="P02461"/>
<dbReference type="DIP" id="DIP-57177N"/>
<dbReference type="FunCoup" id="P02461">
    <property type="interactions" value="263"/>
</dbReference>
<dbReference type="IntAct" id="P02461">
    <property type="interactions" value="33"/>
</dbReference>
<dbReference type="MINT" id="P02461"/>
<dbReference type="STRING" id="9606.ENSP00000304408"/>
<dbReference type="ChEMBL" id="CHEMBL2364188"/>
<dbReference type="DrugBank" id="DB00048">
    <property type="generic name" value="Collagenase clostridium histolyticum"/>
</dbReference>
<dbReference type="DrugBank" id="DB06037">
    <property type="generic name" value="PR-15"/>
</dbReference>
<dbReference type="GlyConnect" id="1127">
    <property type="glycosylation" value="6 N-Linked glycans (1 site)"/>
</dbReference>
<dbReference type="GlyCosmos" id="P02461">
    <property type="glycosylation" value="5 sites, 8 glycans"/>
</dbReference>
<dbReference type="GlyGen" id="P02461">
    <property type="glycosylation" value="13 sites, 18 N-linked glycans (1 site), 4 O-linked glycans (9 sites)"/>
</dbReference>
<dbReference type="iPTMnet" id="P02461"/>
<dbReference type="PhosphoSitePlus" id="P02461"/>
<dbReference type="BioMuta" id="COL3A1"/>
<dbReference type="DMDM" id="124056490"/>
<dbReference type="CPTAC" id="CPTAC-1180"/>
<dbReference type="jPOST" id="P02461"/>
<dbReference type="MassIVE" id="P02461"/>
<dbReference type="PaxDb" id="9606-ENSP00000304408"/>
<dbReference type="PeptideAtlas" id="P02461"/>
<dbReference type="ProteomicsDB" id="51522">
    <molecule id="P02461-1"/>
</dbReference>
<dbReference type="ProteomicsDB" id="51523">
    <molecule id="P02461-2"/>
</dbReference>
<dbReference type="Pumba" id="P02461"/>
<dbReference type="Antibodypedia" id="3392">
    <property type="antibodies" value="785 antibodies from 41 providers"/>
</dbReference>
<dbReference type="DNASU" id="1281"/>
<dbReference type="Ensembl" id="ENST00000304636.9">
    <molecule id="P02461-1"/>
    <property type="protein sequence ID" value="ENSP00000304408.4"/>
    <property type="gene ID" value="ENSG00000168542.18"/>
</dbReference>
<dbReference type="GeneID" id="1281"/>
<dbReference type="KEGG" id="hsa:1281"/>
<dbReference type="MANE-Select" id="ENST00000304636.9">
    <property type="protein sequence ID" value="ENSP00000304408.4"/>
    <property type="RefSeq nucleotide sequence ID" value="NM_000090.4"/>
    <property type="RefSeq protein sequence ID" value="NP_000081.2"/>
</dbReference>
<dbReference type="UCSC" id="uc002uqj.2">
    <molecule id="P02461-1"/>
    <property type="organism name" value="human"/>
</dbReference>
<dbReference type="AGR" id="HGNC:2201"/>
<dbReference type="CTD" id="1281"/>
<dbReference type="DisGeNET" id="1281"/>
<dbReference type="GeneCards" id="COL3A1"/>
<dbReference type="GeneReviews" id="COL3A1"/>
<dbReference type="HGNC" id="HGNC:2201">
    <property type="gene designation" value="COL3A1"/>
</dbReference>
<dbReference type="HPA" id="ENSG00000168542">
    <property type="expression patterns" value="Tissue enhanced (cervix, gallbladder, placenta, smooth muscle)"/>
</dbReference>
<dbReference type="MalaCards" id="COL3A1"/>
<dbReference type="MIM" id="120180">
    <property type="type" value="gene"/>
</dbReference>
<dbReference type="MIM" id="130050">
    <property type="type" value="phenotype"/>
</dbReference>
<dbReference type="MIM" id="618343">
    <property type="type" value="phenotype"/>
</dbReference>
<dbReference type="neXtProt" id="NX_P02461"/>
<dbReference type="OpenTargets" id="ENSG00000168542"/>
<dbReference type="Orphanet" id="2500">
    <property type="disease" value="Acrogeria"/>
</dbReference>
<dbReference type="Orphanet" id="86">
    <property type="disease" value="Familial abdominal aortic aneurysm"/>
</dbReference>
<dbReference type="Orphanet" id="231160">
    <property type="disease" value="Familial cerebral saccular aneurysm"/>
</dbReference>
<dbReference type="Orphanet" id="286">
    <property type="disease" value="Vascular Ehlers-Danlos syndrome"/>
</dbReference>
<dbReference type="Orphanet" id="636941">
    <property type="disease" value="Vascular Ehlers-Danlos-polymicrogyria syndrome"/>
</dbReference>
<dbReference type="PharmGKB" id="PA26716"/>
<dbReference type="VEuPathDB" id="HostDB:ENSG00000168542"/>
<dbReference type="eggNOG" id="KOG3544">
    <property type="taxonomic scope" value="Eukaryota"/>
</dbReference>
<dbReference type="GeneTree" id="ENSGT00940000161229"/>
<dbReference type="HOGENOM" id="CLU_001074_2_3_1"/>
<dbReference type="InParanoid" id="P02461"/>
<dbReference type="OMA" id="NLDCPNP"/>
<dbReference type="OrthoDB" id="8939548at2759"/>
<dbReference type="PAN-GO" id="P02461">
    <property type="GO annotations" value="4 GO annotations based on evolutionary models"/>
</dbReference>
<dbReference type="PhylomeDB" id="P02461"/>
<dbReference type="TreeFam" id="TF344135"/>
<dbReference type="PathwayCommons" id="P02461"/>
<dbReference type="Reactome" id="R-HSA-1442490">
    <property type="pathway name" value="Collagen degradation"/>
</dbReference>
<dbReference type="Reactome" id="R-HSA-1474244">
    <property type="pathway name" value="Extracellular matrix organization"/>
</dbReference>
<dbReference type="Reactome" id="R-HSA-1650814">
    <property type="pathway name" value="Collagen biosynthesis and modifying enzymes"/>
</dbReference>
<dbReference type="Reactome" id="R-HSA-186797">
    <property type="pathway name" value="Signaling by PDGF"/>
</dbReference>
<dbReference type="Reactome" id="R-HSA-198933">
    <property type="pathway name" value="Immunoregulatory interactions between a Lymphoid and a non-Lymphoid cell"/>
</dbReference>
<dbReference type="Reactome" id="R-HSA-2022090">
    <property type="pathway name" value="Assembly of collagen fibrils and other multimeric structures"/>
</dbReference>
<dbReference type="Reactome" id="R-HSA-216083">
    <property type="pathway name" value="Integrin cell surface interactions"/>
</dbReference>
<dbReference type="Reactome" id="R-HSA-3000170">
    <property type="pathway name" value="Syndecan interactions"/>
</dbReference>
<dbReference type="Reactome" id="R-HSA-3000171">
    <property type="pathway name" value="Non-integrin membrane-ECM interactions"/>
</dbReference>
<dbReference type="Reactome" id="R-HSA-3000178">
    <property type="pathway name" value="ECM proteoglycans"/>
</dbReference>
<dbReference type="Reactome" id="R-HSA-3000480">
    <property type="pathway name" value="Scavenging by Class A Receptors"/>
</dbReference>
<dbReference type="Reactome" id="R-HSA-419037">
    <property type="pathway name" value="NCAM1 interactions"/>
</dbReference>
<dbReference type="Reactome" id="R-HSA-8874081">
    <property type="pathway name" value="MET activates PTK2 signaling"/>
</dbReference>
<dbReference type="Reactome" id="R-HSA-8948216">
    <property type="pathway name" value="Collagen chain trimerization"/>
</dbReference>
<dbReference type="SignaLink" id="P02461"/>
<dbReference type="SIGNOR" id="P02461"/>
<dbReference type="BioGRID-ORCS" id="1281">
    <property type="hits" value="15 hits in 1151 CRISPR screens"/>
</dbReference>
<dbReference type="ChiTaRS" id="COL3A1">
    <property type="organism name" value="human"/>
</dbReference>
<dbReference type="EvolutionaryTrace" id="P02461"/>
<dbReference type="GeneWiki" id="Collagen,_type_III,_alpha_1"/>
<dbReference type="GenomeRNAi" id="1281"/>
<dbReference type="Pharos" id="P02461">
    <property type="development level" value="Tbio"/>
</dbReference>
<dbReference type="PRO" id="PR:P02461"/>
<dbReference type="Proteomes" id="UP000005640">
    <property type="component" value="Chromosome 2"/>
</dbReference>
<dbReference type="RNAct" id="P02461">
    <property type="molecule type" value="protein"/>
</dbReference>
<dbReference type="Bgee" id="ENSG00000168542">
    <property type="expression patterns" value="Expressed in skin of hip and 200 other cell types or tissues"/>
</dbReference>
<dbReference type="ExpressionAtlas" id="P02461">
    <property type="expression patterns" value="baseline and differential"/>
</dbReference>
<dbReference type="GO" id="GO:0005586">
    <property type="term" value="C:collagen type III trimer"/>
    <property type="evidence" value="ECO:0000314"/>
    <property type="project" value="CAFA"/>
</dbReference>
<dbReference type="GO" id="GO:0062023">
    <property type="term" value="C:collagen-containing extracellular matrix"/>
    <property type="evidence" value="ECO:0000315"/>
    <property type="project" value="UniProtKB"/>
</dbReference>
<dbReference type="GO" id="GO:0005788">
    <property type="term" value="C:endoplasmic reticulum lumen"/>
    <property type="evidence" value="ECO:0000304"/>
    <property type="project" value="Reactome"/>
</dbReference>
<dbReference type="GO" id="GO:0005576">
    <property type="term" value="C:extracellular region"/>
    <property type="evidence" value="ECO:0007005"/>
    <property type="project" value="BHF-UCL"/>
</dbReference>
<dbReference type="GO" id="GO:0005615">
    <property type="term" value="C:extracellular space"/>
    <property type="evidence" value="ECO:0000314"/>
    <property type="project" value="UniProtKB"/>
</dbReference>
<dbReference type="GO" id="GO:0005201">
    <property type="term" value="F:extracellular matrix structural constituent"/>
    <property type="evidence" value="ECO:0000315"/>
    <property type="project" value="UniProtKB"/>
</dbReference>
<dbReference type="GO" id="GO:0030020">
    <property type="term" value="F:extracellular matrix structural constituent conferring tensile strength"/>
    <property type="evidence" value="ECO:0007005"/>
    <property type="project" value="BHF-UCL"/>
</dbReference>
<dbReference type="GO" id="GO:0005178">
    <property type="term" value="F:integrin binding"/>
    <property type="evidence" value="ECO:0000315"/>
    <property type="project" value="UniProtKB"/>
</dbReference>
<dbReference type="GO" id="GO:0046872">
    <property type="term" value="F:metal ion binding"/>
    <property type="evidence" value="ECO:0007669"/>
    <property type="project" value="UniProtKB-KW"/>
</dbReference>
<dbReference type="GO" id="GO:0048407">
    <property type="term" value="F:platelet-derived growth factor binding"/>
    <property type="evidence" value="ECO:0000314"/>
    <property type="project" value="MGI"/>
</dbReference>
<dbReference type="GO" id="GO:0002020">
    <property type="term" value="F:protease binding"/>
    <property type="evidence" value="ECO:0000353"/>
    <property type="project" value="CAFA"/>
</dbReference>
<dbReference type="GO" id="GO:0046332">
    <property type="term" value="F:SMAD binding"/>
    <property type="evidence" value="ECO:0007669"/>
    <property type="project" value="Ensembl"/>
</dbReference>
<dbReference type="GO" id="GO:0060414">
    <property type="term" value="P:aorta smooth muscle tissue morphogenesis"/>
    <property type="evidence" value="ECO:0007669"/>
    <property type="project" value="Ensembl"/>
</dbReference>
<dbReference type="GO" id="GO:0071711">
    <property type="term" value="P:basement membrane organization"/>
    <property type="evidence" value="ECO:0007669"/>
    <property type="project" value="Ensembl"/>
</dbReference>
<dbReference type="GO" id="GO:0007160">
    <property type="term" value="P:cell-matrix adhesion"/>
    <property type="evidence" value="ECO:0000314"/>
    <property type="project" value="UniProtKB"/>
</dbReference>
<dbReference type="GO" id="GO:0071230">
    <property type="term" value="P:cellular response to amino acid stimulus"/>
    <property type="evidence" value="ECO:0007669"/>
    <property type="project" value="Ensembl"/>
</dbReference>
<dbReference type="GO" id="GO:0021987">
    <property type="term" value="P:cerebral cortex development"/>
    <property type="evidence" value="ECO:0000250"/>
    <property type="project" value="UniProtKB"/>
</dbReference>
<dbReference type="GO" id="GO:0002062">
    <property type="term" value="P:chondrocyte differentiation"/>
    <property type="evidence" value="ECO:0007669"/>
    <property type="project" value="Ensembl"/>
</dbReference>
<dbReference type="GO" id="GO:0030199">
    <property type="term" value="P:collagen fibril organization"/>
    <property type="evidence" value="ECO:0000315"/>
    <property type="project" value="UniProtKB"/>
</dbReference>
<dbReference type="GO" id="GO:0048565">
    <property type="term" value="P:digestive tract development"/>
    <property type="evidence" value="ECO:0007669"/>
    <property type="project" value="Ensembl"/>
</dbReference>
<dbReference type="GO" id="GO:0048251">
    <property type="term" value="P:elastic fiber assembly"/>
    <property type="evidence" value="ECO:0007669"/>
    <property type="project" value="Ensembl"/>
</dbReference>
<dbReference type="GO" id="GO:0060350">
    <property type="term" value="P:endochondral bone morphogenesis"/>
    <property type="evidence" value="ECO:0007669"/>
    <property type="project" value="Ensembl"/>
</dbReference>
<dbReference type="GO" id="GO:0048144">
    <property type="term" value="P:fibroblast proliferation"/>
    <property type="evidence" value="ECO:0007669"/>
    <property type="project" value="Ensembl"/>
</dbReference>
<dbReference type="GO" id="GO:0007507">
    <property type="term" value="P:heart development"/>
    <property type="evidence" value="ECO:0000315"/>
    <property type="project" value="UniProtKB"/>
</dbReference>
<dbReference type="GO" id="GO:0001701">
    <property type="term" value="P:in utero embryonic development"/>
    <property type="evidence" value="ECO:0007669"/>
    <property type="project" value="Ensembl"/>
</dbReference>
<dbReference type="GO" id="GO:0007229">
    <property type="term" value="P:integrin-mediated signaling pathway"/>
    <property type="evidence" value="ECO:0000315"/>
    <property type="project" value="UniProtKB"/>
</dbReference>
<dbReference type="GO" id="GO:0021819">
    <property type="term" value="P:layer formation in cerebral cortex"/>
    <property type="evidence" value="ECO:0007669"/>
    <property type="project" value="Ensembl"/>
</dbReference>
<dbReference type="GO" id="GO:0036022">
    <property type="term" value="P:limb joint morphogenesis"/>
    <property type="evidence" value="ECO:0007669"/>
    <property type="project" value="Ensembl"/>
</dbReference>
<dbReference type="GO" id="GO:0030324">
    <property type="term" value="P:lung development"/>
    <property type="evidence" value="ECO:0007669"/>
    <property type="project" value="Ensembl"/>
</dbReference>
<dbReference type="GO" id="GO:0035264">
    <property type="term" value="P:multicellular organism growth"/>
    <property type="evidence" value="ECO:0007669"/>
    <property type="project" value="Ensembl"/>
</dbReference>
<dbReference type="GO" id="GO:0050777">
    <property type="term" value="P:negative regulation of immune response"/>
    <property type="evidence" value="ECO:0000315"/>
    <property type="project" value="UniProtKB"/>
</dbReference>
<dbReference type="GO" id="GO:2001223">
    <property type="term" value="P:negative regulation of neuron migration"/>
    <property type="evidence" value="ECO:0000250"/>
    <property type="project" value="UniProtKB"/>
</dbReference>
<dbReference type="GO" id="GO:0001764">
    <property type="term" value="P:neuron migration"/>
    <property type="evidence" value="ECO:0007669"/>
    <property type="project" value="Ensembl"/>
</dbReference>
<dbReference type="GO" id="GO:0018149">
    <property type="term" value="P:peptide cross-linking"/>
    <property type="evidence" value="ECO:0000314"/>
    <property type="project" value="UniProtKB"/>
</dbReference>
<dbReference type="GO" id="GO:0030168">
    <property type="term" value="P:platelet activation"/>
    <property type="evidence" value="ECO:0000303"/>
    <property type="project" value="UniProtKB"/>
</dbReference>
<dbReference type="GO" id="GO:0035025">
    <property type="term" value="P:positive regulation of Rho protein signal transduction"/>
    <property type="evidence" value="ECO:0000250"/>
    <property type="project" value="UniProtKB"/>
</dbReference>
<dbReference type="GO" id="GO:1990776">
    <property type="term" value="P:response to angiotensin"/>
    <property type="evidence" value="ECO:0007669"/>
    <property type="project" value="Ensembl"/>
</dbReference>
<dbReference type="GO" id="GO:0034097">
    <property type="term" value="P:response to cytokine"/>
    <property type="evidence" value="ECO:0000314"/>
    <property type="project" value="UniProtKB"/>
</dbReference>
<dbReference type="GO" id="GO:0009314">
    <property type="term" value="P:response to radiation"/>
    <property type="evidence" value="ECO:0000314"/>
    <property type="project" value="UniProtKB"/>
</dbReference>
<dbReference type="GO" id="GO:0043588">
    <property type="term" value="P:skin development"/>
    <property type="evidence" value="ECO:0000315"/>
    <property type="project" value="UniProtKB"/>
</dbReference>
<dbReference type="GO" id="GO:0097435">
    <property type="term" value="P:supramolecular fiber organization"/>
    <property type="evidence" value="ECO:0000315"/>
    <property type="project" value="UniProtKB"/>
</dbReference>
<dbReference type="GO" id="GO:0001894">
    <property type="term" value="P:tissue homeostasis"/>
    <property type="evidence" value="ECO:0007669"/>
    <property type="project" value="Ensembl"/>
</dbReference>
<dbReference type="GO" id="GO:0007179">
    <property type="term" value="P:transforming growth factor beta receptor signaling pathway"/>
    <property type="evidence" value="ECO:0000314"/>
    <property type="project" value="UniProtKB"/>
</dbReference>
<dbReference type="GO" id="GO:0032905">
    <property type="term" value="P:transforming growth factor beta1 production"/>
    <property type="evidence" value="ECO:0007669"/>
    <property type="project" value="Ensembl"/>
</dbReference>
<dbReference type="GO" id="GO:0042060">
    <property type="term" value="P:wound healing"/>
    <property type="evidence" value="ECO:0000314"/>
    <property type="project" value="UniProtKB"/>
</dbReference>
<dbReference type="FunFam" id="2.60.120.1000:FF:000001">
    <property type="entry name" value="Collagen alpha-1 type I chain"/>
    <property type="match status" value="1"/>
</dbReference>
<dbReference type="FunFam" id="2.10.70.10:FF:000013">
    <property type="entry name" value="Collagen, type I, alpha 1"/>
    <property type="match status" value="1"/>
</dbReference>
<dbReference type="Gene3D" id="2.60.120.1000">
    <property type="match status" value="1"/>
</dbReference>
<dbReference type="Gene3D" id="2.10.70.10">
    <property type="entry name" value="Complement Module, domain 1"/>
    <property type="match status" value="1"/>
</dbReference>
<dbReference type="InterPro" id="IPR008160">
    <property type="entry name" value="Collagen"/>
</dbReference>
<dbReference type="InterPro" id="IPR050149">
    <property type="entry name" value="Collagen_superfamily"/>
</dbReference>
<dbReference type="InterPro" id="IPR000885">
    <property type="entry name" value="Fib_collagen_C"/>
</dbReference>
<dbReference type="InterPro" id="IPR001007">
    <property type="entry name" value="VWF_dom"/>
</dbReference>
<dbReference type="PANTHER" id="PTHR24023">
    <property type="entry name" value="COLLAGEN ALPHA"/>
    <property type="match status" value="1"/>
</dbReference>
<dbReference type="PANTHER" id="PTHR24023:SF1082">
    <property type="entry name" value="COLLAGEN TRIPLE HELIX REPEAT"/>
    <property type="match status" value="1"/>
</dbReference>
<dbReference type="Pfam" id="PF01410">
    <property type="entry name" value="COLFI"/>
    <property type="match status" value="1"/>
</dbReference>
<dbReference type="Pfam" id="PF01391">
    <property type="entry name" value="Collagen"/>
    <property type="match status" value="5"/>
</dbReference>
<dbReference type="Pfam" id="PF00093">
    <property type="entry name" value="VWC"/>
    <property type="match status" value="1"/>
</dbReference>
<dbReference type="SMART" id="SM00038">
    <property type="entry name" value="COLFI"/>
    <property type="match status" value="1"/>
</dbReference>
<dbReference type="SMART" id="SM00214">
    <property type="entry name" value="VWC"/>
    <property type="match status" value="1"/>
</dbReference>
<dbReference type="SUPFAM" id="SSF57603">
    <property type="entry name" value="FnI-like domain"/>
    <property type="match status" value="1"/>
</dbReference>
<dbReference type="PROSITE" id="PS51461">
    <property type="entry name" value="NC1_FIB"/>
    <property type="match status" value="1"/>
</dbReference>
<dbReference type="PROSITE" id="PS01208">
    <property type="entry name" value="VWFC_1"/>
    <property type="match status" value="1"/>
</dbReference>
<dbReference type="PROSITE" id="PS50184">
    <property type="entry name" value="VWFC_2"/>
    <property type="match status" value="1"/>
</dbReference>
<accession>P02461</accession>
<accession>D2JYH5</accession>
<accession>D3DPH4</accession>
<accession>P78429</accession>
<accession>Q15112</accession>
<accession>Q16403</accession>
<accession>Q53S91</accession>
<accession>Q541P8</accession>
<accession>Q6LDB3</accession>
<accession>Q6LDJ2</accession>
<accession>Q6LDJ3</accession>
<accession>Q7KZ56</accession>
<accession>Q8N6U4</accession>
<accession>Q9UC88</accession>
<accession>Q9UC89</accession>
<accession>Q9UC90</accession>
<accession>Q9UC91</accession>
<accession>R4N3C5</accession>
<accession>V9GZI1</accession>
<evidence type="ECO:0000255" key="1">
    <source>
        <dbReference type="PROSITE-ProRule" id="PRU00220"/>
    </source>
</evidence>
<evidence type="ECO:0000255" key="2">
    <source>
        <dbReference type="PROSITE-ProRule" id="PRU00793"/>
    </source>
</evidence>
<evidence type="ECO:0000256" key="3">
    <source>
        <dbReference type="SAM" id="MobiDB-lite"/>
    </source>
</evidence>
<evidence type="ECO:0000269" key="4">
    <source>
    </source>
</evidence>
<evidence type="ECO:0000269" key="5">
    <source>
    </source>
</evidence>
<evidence type="ECO:0000269" key="6">
    <source>
    </source>
</evidence>
<evidence type="ECO:0000269" key="7">
    <source>
    </source>
</evidence>
<evidence type="ECO:0000269" key="8">
    <source>
    </source>
</evidence>
<evidence type="ECO:0000269" key="9">
    <source>
    </source>
</evidence>
<evidence type="ECO:0000269" key="10">
    <source>
    </source>
</evidence>
<evidence type="ECO:0000269" key="11">
    <source>
    </source>
</evidence>
<evidence type="ECO:0000269" key="12">
    <source>
    </source>
</evidence>
<evidence type="ECO:0000269" key="13">
    <source>
    </source>
</evidence>
<evidence type="ECO:0000269" key="14">
    <source>
    </source>
</evidence>
<evidence type="ECO:0000269" key="15">
    <source>
    </source>
</evidence>
<evidence type="ECO:0000269" key="16">
    <source>
    </source>
</evidence>
<evidence type="ECO:0000269" key="17">
    <source>
    </source>
</evidence>
<evidence type="ECO:0000269" key="18">
    <source>
    </source>
</evidence>
<evidence type="ECO:0000269" key="19">
    <source>
    </source>
</evidence>
<evidence type="ECO:0000269" key="20">
    <source>
    </source>
</evidence>
<evidence type="ECO:0000269" key="21">
    <source>
    </source>
</evidence>
<evidence type="ECO:0000269" key="22">
    <source>
    </source>
</evidence>
<evidence type="ECO:0000269" key="23">
    <source>
    </source>
</evidence>
<evidence type="ECO:0000269" key="24">
    <source>
    </source>
</evidence>
<evidence type="ECO:0000269" key="25">
    <source>
    </source>
</evidence>
<evidence type="ECO:0000269" key="26">
    <source>
    </source>
</evidence>
<evidence type="ECO:0000269" key="27">
    <source>
    </source>
</evidence>
<evidence type="ECO:0000269" key="28">
    <source>
    </source>
</evidence>
<evidence type="ECO:0000269" key="29">
    <source>
    </source>
</evidence>
<evidence type="ECO:0000269" key="30">
    <source>
    </source>
</evidence>
<evidence type="ECO:0000269" key="31">
    <source>
    </source>
</evidence>
<evidence type="ECO:0000269" key="32">
    <source>
    </source>
</evidence>
<evidence type="ECO:0000269" key="33">
    <source>
    </source>
</evidence>
<evidence type="ECO:0000269" key="34">
    <source>
    </source>
</evidence>
<evidence type="ECO:0000269" key="35">
    <source>
    </source>
</evidence>
<evidence type="ECO:0000269" key="36">
    <source>
    </source>
</evidence>
<evidence type="ECO:0000269" key="37">
    <source>
    </source>
</evidence>
<evidence type="ECO:0000269" key="38">
    <source>
    </source>
</evidence>
<evidence type="ECO:0000269" key="39">
    <source>
    </source>
</evidence>
<evidence type="ECO:0000269" key="40">
    <source>
    </source>
</evidence>
<evidence type="ECO:0000269" key="41">
    <source>
    </source>
</evidence>
<evidence type="ECO:0000269" key="42">
    <source>
    </source>
</evidence>
<evidence type="ECO:0000269" key="43">
    <source>
    </source>
</evidence>
<evidence type="ECO:0000269" key="44">
    <source>
    </source>
</evidence>
<evidence type="ECO:0000269" key="45">
    <source>
    </source>
</evidence>
<evidence type="ECO:0000269" key="46">
    <source>
    </source>
</evidence>
<evidence type="ECO:0000269" key="47">
    <source>
    </source>
</evidence>
<evidence type="ECO:0000269" key="48">
    <source>
    </source>
</evidence>
<evidence type="ECO:0000269" key="49">
    <source>
    </source>
</evidence>
<evidence type="ECO:0000269" key="50">
    <source>
    </source>
</evidence>
<evidence type="ECO:0000269" key="51">
    <source>
    </source>
</evidence>
<evidence type="ECO:0000269" key="52">
    <source>
    </source>
</evidence>
<evidence type="ECO:0000269" key="53">
    <source ref="3"/>
</evidence>
<evidence type="ECO:0000269" key="54">
    <source ref="50"/>
</evidence>
<evidence type="ECO:0000269" key="55">
    <source ref="55"/>
</evidence>
<evidence type="ECO:0000269" key="56">
    <source ref="6"/>
</evidence>
<evidence type="ECO:0000303" key="57">
    <source>
    </source>
</evidence>
<evidence type="ECO:0000305" key="58"/>
<evidence type="ECO:0007829" key="59">
    <source>
        <dbReference type="PDB" id="4AE2"/>
    </source>
</evidence>
<evidence type="ECO:0007829" key="60">
    <source>
        <dbReference type="PDB" id="4AEJ"/>
    </source>
</evidence>
<evidence type="ECO:0007829" key="61">
    <source>
        <dbReference type="PDB" id="4AK3"/>
    </source>
</evidence>
<evidence type="ECO:0007829" key="62">
    <source>
        <dbReference type="PDB" id="6FZV"/>
    </source>
</evidence>
<name>CO3A1_HUMAN</name>
<gene>
    <name type="primary">COL3A1</name>
</gene>
<keyword id="KW-0002">3D-structure</keyword>
<keyword id="KW-0025">Alternative splicing</keyword>
<keyword id="KW-0993">Aortic aneurysm</keyword>
<keyword id="KW-0106">Calcium</keyword>
<keyword id="KW-0176">Collagen</keyword>
<keyword id="KW-0903">Direct protein sequencing</keyword>
<keyword id="KW-0225">Disease variant</keyword>
<keyword id="KW-1015">Disulfide bond</keyword>
<keyword id="KW-0248">Ehlers-Danlos syndrome</keyword>
<keyword id="KW-0272">Extracellular matrix</keyword>
<keyword id="KW-0325">Glycoprotein</keyword>
<keyword id="KW-0379">Hydroxylation</keyword>
<keyword id="KW-0479">Metal-binding</keyword>
<keyword id="KW-1267">Proteomics identification</keyword>
<keyword id="KW-1185">Reference proteome</keyword>
<keyword id="KW-0677">Repeat</keyword>
<keyword id="KW-0964">Secreted</keyword>
<keyword id="KW-0732">Signal</keyword>
<comment type="function">
    <text>Collagen type III occurs in most soft connective tissues along with type I collagen. Involved in regulation of cortical development. Is the major ligand of ADGRG1 in the developing brain and binding to ADGRG1 inhibits neuronal migration and activates the RhoA pathway by coupling ADGRG1 to GNA13 and possibly GNA12.</text>
</comment>
<comment type="subunit">
    <text evidence="31">Trimers of identical alpha 1(III) chains. The chains are linked to each other by interchain disulfide bonds. Trimers are also cross-linked via hydroxylysines. Interacts with ADGRG1 (PubMed:28258187).</text>
</comment>
<comment type="interaction">
    <interactant intactId="EBI-2431491">
        <id>P02461</id>
    </interactant>
    <interactant intactId="EBI-7685554">
        <id>O01949</id>
        <label>AAEL010235</label>
    </interactant>
    <organismsDiffer>true</organismsDiffer>
    <experiments>2</experiments>
</comment>
<comment type="interaction">
    <interactant intactId="EBI-15740444">
        <id>P02461-1</id>
    </interactant>
    <interactant intactId="EBI-2800983">
        <id>P09486</id>
        <label>SPARC</label>
    </interactant>
    <organismsDiffer>false</organismsDiffer>
    <experiments>4</experiments>
</comment>
<comment type="interaction">
    <interactant intactId="EBI-12214501">
        <id>P02461-2</id>
    </interactant>
    <interactant intactId="EBI-11529439">
        <id>P63010-2</id>
        <label>AP2B1</label>
    </interactant>
    <organismsDiffer>false</organismsDiffer>
    <experiments>3</experiments>
</comment>
<comment type="interaction">
    <interactant intactId="EBI-12214501">
        <id>P02461-2</id>
    </interactant>
    <interactant intactId="EBI-740929">
        <id>Q53G59</id>
        <label>KLHL12</label>
    </interactant>
    <organismsDiffer>false</organismsDiffer>
    <experiments>3</experiments>
</comment>
<comment type="subcellular location">
    <subcellularLocation>
        <location evidence="2">Secreted</location>
        <location evidence="2">Extracellular space</location>
        <location evidence="2">Extracellular matrix</location>
    </subcellularLocation>
</comment>
<comment type="alternative products">
    <event type="alternative splicing"/>
    <isoform>
        <id>P02461-1</id>
        <name>1</name>
        <sequence type="displayed"/>
    </isoform>
    <isoform>
        <id>P02461-2</id>
        <name>2</name>
        <sequence type="described" ref="VSP_022502"/>
    </isoform>
</comment>
<comment type="domain">
    <text>The C-terminal propeptide, also known as COLFI domain, have crucial roles in tissue growth and repair by controlling both the intracellular assembly of procollagen molecules and the extracellular assembly of collagen fibrils. It binds a calcium ion which is essential for its function.</text>
</comment>
<comment type="PTM">
    <text evidence="34 37">Proline residues at the third position of the tripeptide repeating unit (G-X-Y) are hydroxylated in some or all of the chains.</text>
</comment>
<comment type="PTM">
    <text>O-linked glycan consists of a Glc-Gal disaccharide bound to the oxygen atom of a post-translationally added hydroxyl group.</text>
</comment>
<comment type="disease" evidence="4 5 7 8 10 11 12 13 14 15 19 21 23 25 26 30 38 39 40 41 42 44 45 46 47 48 49 50 51 52 54 55">
    <disease id="DI-00439">
        <name>Ehlers-Danlos syndrome, vascular type</name>
        <acronym>EDSVASC</acronym>
        <description>A severe form of Ehlers-Danlos syndrome, a group of connective tissue disorders characterized by skin hyperextensibility, articular hypermobility, and tissue fragility. EDSVASC is an autosomal dominant disease characterized by joint and dermal manifestations as in other forms of the syndrome, and by proneness to spontaneous rupture of bowel and large arteries. The vascular complications may affect all anatomical areas.</description>
        <dbReference type="MIM" id="130050"/>
    </disease>
    <text>The disease is caused by variants affecting the gene represented in this entry.</text>
</comment>
<comment type="disease" evidence="20 27 31 32">
    <disease id="DI-05505">
        <name>Polymicrogyria with or without vascular-type Ehlers-Danlos syndrome</name>
        <acronym>PMGEDSV</acronym>
        <description>An autosomal recessive disorder with a highly variable phenotype and onset in early childhood. Disease features include cobblestone-like malformation of the cortex, polymicrogyria, intellectual and motor developmental delay, small joint hypermobility, vascular fragility, aneurysms, thin translucent skin and easy bruising, congenital heart defects, and foot deformities. Early death due to vascular dissection may occur.</description>
        <dbReference type="MIM" id="618343"/>
    </disease>
    <text>The disease is caused by variants affecting the gene represented in this entry.</text>
</comment>
<comment type="similarity">
    <text evidence="2">Belongs to the fibrillar collagen family.</text>
</comment>
<comment type="online information" name="Wikipedia">
    <link uri="https://en.wikipedia.org/wiki/Type-III_collagen"/>
    <text>Type-III collagen entry</text>
</comment>
<protein>
    <recommendedName>
        <fullName>Collagen alpha-1(III) chain</fullName>
    </recommendedName>
</protein>